<feature type="chain" id="PRO_0000072643" description="TP53-binding protein 1">
    <location>
        <begin position="1"/>
        <end position="1972"/>
    </location>
</feature>
<feature type="domain" description="BRCT 1" evidence="2">
    <location>
        <begin position="1724"/>
        <end position="1848"/>
    </location>
</feature>
<feature type="domain" description="BRCT 2" evidence="2">
    <location>
        <begin position="1864"/>
        <end position="1964"/>
    </location>
</feature>
<feature type="region of interest" description="Disordered" evidence="3">
    <location>
        <begin position="24"/>
        <end position="273"/>
    </location>
</feature>
<feature type="region of interest" description="Disordered" evidence="3">
    <location>
        <begin position="290"/>
        <end position="332"/>
    </location>
</feature>
<feature type="region of interest" description="Disordered" evidence="3">
    <location>
        <begin position="346"/>
        <end position="507"/>
    </location>
</feature>
<feature type="region of interest" description="Disordered" evidence="3">
    <location>
        <begin position="520"/>
        <end position="556"/>
    </location>
</feature>
<feature type="region of interest" description="Disordered" evidence="3">
    <location>
        <begin position="568"/>
        <end position="595"/>
    </location>
</feature>
<feature type="region of interest" description="Disordered" evidence="3">
    <location>
        <begin position="649"/>
        <end position="687"/>
    </location>
</feature>
<feature type="region of interest" description="Disordered" evidence="3">
    <location>
        <begin position="742"/>
        <end position="911"/>
    </location>
</feature>
<feature type="region of interest" description="Disordered" evidence="3">
    <location>
        <begin position="997"/>
        <end position="1028"/>
    </location>
</feature>
<feature type="region of interest" description="Disordered" evidence="3">
    <location>
        <begin position="1045"/>
        <end position="1103"/>
    </location>
</feature>
<feature type="region of interest" description="Disordered" evidence="3">
    <location>
        <begin position="1127"/>
        <end position="1148"/>
    </location>
</feature>
<feature type="region of interest" description="Disordered" evidence="3">
    <location>
        <begin position="1188"/>
        <end position="1232"/>
    </location>
</feature>
<feature type="region of interest" description="Disordered" evidence="3">
    <location>
        <begin position="1269"/>
        <end position="1478"/>
    </location>
</feature>
<feature type="region of interest" description="Tudor-like" evidence="44">
    <location>
        <begin position="1484"/>
        <end position="1603"/>
    </location>
</feature>
<feature type="region of interest" description="Interaction with dimethylated histone H4" evidence="16">
    <location>
        <begin position="1495"/>
        <end position="1523"/>
    </location>
</feature>
<feature type="region of interest" description="Disordered" evidence="3">
    <location>
        <begin position="1622"/>
        <end position="1719"/>
    </location>
</feature>
<feature type="region of interest" description="Disordered" evidence="3">
    <location>
        <begin position="1745"/>
        <end position="1768"/>
    </location>
</feature>
<feature type="short sequence motif" description="GAR" evidence="14">
    <location>
        <begin position="1396"/>
        <end position="1403"/>
    </location>
</feature>
<feature type="short sequence motif" description="UDR" evidence="28">
    <location>
        <begin position="1604"/>
        <end position="1631"/>
    </location>
</feature>
<feature type="compositionally biased region" description="Basic and acidic residues" evidence="3">
    <location>
        <begin position="82"/>
        <end position="91"/>
    </location>
</feature>
<feature type="compositionally biased region" description="Polar residues" evidence="3">
    <location>
        <begin position="94"/>
        <end position="121"/>
    </location>
</feature>
<feature type="compositionally biased region" description="Basic and acidic residues" evidence="3">
    <location>
        <begin position="138"/>
        <end position="149"/>
    </location>
</feature>
<feature type="compositionally biased region" description="Polar residues" evidence="3">
    <location>
        <begin position="151"/>
        <end position="168"/>
    </location>
</feature>
<feature type="compositionally biased region" description="Polar residues" evidence="3">
    <location>
        <begin position="195"/>
        <end position="205"/>
    </location>
</feature>
<feature type="compositionally biased region" description="Polar residues" evidence="3">
    <location>
        <begin position="300"/>
        <end position="322"/>
    </location>
</feature>
<feature type="compositionally biased region" description="Polar residues" evidence="3">
    <location>
        <begin position="346"/>
        <end position="361"/>
    </location>
</feature>
<feature type="compositionally biased region" description="Polar residues" evidence="3">
    <location>
        <begin position="426"/>
        <end position="441"/>
    </location>
</feature>
<feature type="compositionally biased region" description="Pro residues" evidence="3">
    <location>
        <begin position="442"/>
        <end position="452"/>
    </location>
</feature>
<feature type="compositionally biased region" description="Polar residues" evidence="3">
    <location>
        <begin position="481"/>
        <end position="490"/>
    </location>
</feature>
<feature type="compositionally biased region" description="Basic and acidic residues" evidence="3">
    <location>
        <begin position="491"/>
        <end position="501"/>
    </location>
</feature>
<feature type="compositionally biased region" description="Polar residues" evidence="3">
    <location>
        <begin position="520"/>
        <end position="531"/>
    </location>
</feature>
<feature type="compositionally biased region" description="Acidic residues" evidence="3">
    <location>
        <begin position="538"/>
        <end position="549"/>
    </location>
</feature>
<feature type="compositionally biased region" description="Basic and acidic residues" evidence="3">
    <location>
        <begin position="582"/>
        <end position="595"/>
    </location>
</feature>
<feature type="compositionally biased region" description="Basic and acidic residues" evidence="3">
    <location>
        <begin position="798"/>
        <end position="816"/>
    </location>
</feature>
<feature type="compositionally biased region" description="Basic and acidic residues" evidence="3">
    <location>
        <begin position="839"/>
        <end position="848"/>
    </location>
</feature>
<feature type="compositionally biased region" description="Polar residues" evidence="3">
    <location>
        <begin position="849"/>
        <end position="864"/>
    </location>
</feature>
<feature type="compositionally biased region" description="Polar residues" evidence="3">
    <location>
        <begin position="890"/>
        <end position="902"/>
    </location>
</feature>
<feature type="compositionally biased region" description="Polar residues" evidence="3">
    <location>
        <begin position="1018"/>
        <end position="1028"/>
    </location>
</feature>
<feature type="compositionally biased region" description="Basic and acidic residues" evidence="3">
    <location>
        <begin position="1071"/>
        <end position="1083"/>
    </location>
</feature>
<feature type="compositionally biased region" description="Basic and acidic residues" evidence="3">
    <location>
        <begin position="1127"/>
        <end position="1139"/>
    </location>
</feature>
<feature type="compositionally biased region" description="Polar residues" evidence="3">
    <location>
        <begin position="1188"/>
        <end position="1200"/>
    </location>
</feature>
<feature type="compositionally biased region" description="Acidic residues" evidence="3">
    <location>
        <begin position="1272"/>
        <end position="1285"/>
    </location>
</feature>
<feature type="compositionally biased region" description="Low complexity" evidence="3">
    <location>
        <begin position="1298"/>
        <end position="1307"/>
    </location>
</feature>
<feature type="compositionally biased region" description="Low complexity" evidence="3">
    <location>
        <begin position="1316"/>
        <end position="1329"/>
    </location>
</feature>
<feature type="compositionally biased region" description="Low complexity" evidence="3">
    <location>
        <begin position="1634"/>
        <end position="1650"/>
    </location>
</feature>
<feature type="modified residue" description="Phosphoserine" evidence="19">
    <location>
        <position position="25"/>
    </location>
</feature>
<feature type="modified residue" description="Phosphoserine" evidence="56">
    <location>
        <position position="63"/>
    </location>
</feature>
<feature type="modified residue" description="Phosphoserine" evidence="51">
    <location>
        <position position="105"/>
    </location>
</feature>
<feature type="modified residue" description="Phosphoserine" evidence="54 56">
    <location>
        <position position="124"/>
    </location>
</feature>
<feature type="modified residue" description="Phosphoserine" evidence="17">
    <location>
        <position position="166"/>
    </location>
</feature>
<feature type="modified residue" description="Phosphoserine" evidence="45">
    <location>
        <position position="176"/>
    </location>
</feature>
<feature type="modified residue" description="Phosphoserine" evidence="45">
    <location>
        <position position="178"/>
    </location>
</feature>
<feature type="modified residue" description="Phosphoserine" evidence="50 52 55 56">
    <location>
        <position position="222"/>
    </location>
</feature>
<feature type="modified residue" description="Phosphoserine" evidence="52 56">
    <location>
        <position position="265"/>
    </location>
</feature>
<feature type="modified residue" description="Phosphoserine" evidence="17 50 53 54 55 56 57">
    <location>
        <position position="294"/>
    </location>
</feature>
<feature type="modified residue" description="Phosphothreonine" evidence="17 51">
    <location>
        <position position="302"/>
    </location>
</feature>
<feature type="modified residue" description="Phosphoserine" evidence="35 53 56">
    <location>
        <position position="366"/>
    </location>
</feature>
<feature type="modified residue" description="Phosphoserine" evidence="17 53 56">
    <location>
        <position position="380"/>
    </location>
</feature>
<feature type="modified residue" description="Phosphoserine" evidence="52">
    <location>
        <position position="395"/>
    </location>
</feature>
<feature type="modified residue" description="Phosphoserine" evidence="52 56">
    <location>
        <position position="398"/>
    </location>
</feature>
<feature type="modified residue" description="Phosphoserine" evidence="1">
    <location>
        <position position="429"/>
    </location>
</feature>
<feature type="modified residue" description="Phosphoserine" evidence="17">
    <location>
        <position position="452"/>
    </location>
</feature>
<feature type="modified residue" description="Phosphoserine" evidence="1">
    <location>
        <position position="464"/>
    </location>
</feature>
<feature type="modified residue" description="Phosphoserine" evidence="50 52 53 54 55 56 57">
    <location>
        <position position="500"/>
    </location>
</feature>
<feature type="modified residue" description="Phosphoserine" evidence="56">
    <location>
        <position position="507"/>
    </location>
</feature>
<feature type="modified residue" description="Phosphoserine" evidence="56">
    <location>
        <position position="518"/>
    </location>
</feature>
<feature type="modified residue" description="Phosphoserine" evidence="17 51 52 53 56">
    <location>
        <position position="523"/>
    </location>
</feature>
<feature type="modified residue" description="Phosphoserine" evidence="52 53 54 55 56">
    <location>
        <position position="525"/>
    </location>
</feature>
<feature type="modified residue" description="Phosphothreonine" evidence="51 53">
    <location>
        <position position="543"/>
    </location>
</feature>
<feature type="modified residue" description="Phosphothreonine" evidence="51">
    <location>
        <position position="548"/>
    </location>
</feature>
<feature type="modified residue" description="Phosphoserine" evidence="17 51 52 53 54 55 56 57">
    <location>
        <position position="552"/>
    </location>
</feature>
<feature type="modified residue" description="Phosphoserine" evidence="54">
    <location>
        <position position="566"/>
    </location>
</feature>
<feature type="modified residue" description="Phosphoserine" evidence="54 56">
    <location>
        <position position="580"/>
    </location>
</feature>
<feature type="modified residue" description="Phosphoserine" evidence="57">
    <location>
        <position position="630"/>
    </location>
</feature>
<feature type="modified residue" description="Phosphoserine" evidence="50">
    <location>
        <position position="635"/>
    </location>
</feature>
<feature type="modified residue" description="Phosphoserine" evidence="50 54">
    <location>
        <position position="639"/>
    </location>
</feature>
<feature type="modified residue" description="Phosphoserine" evidence="50 54">
    <location>
        <position position="640"/>
    </location>
</feature>
<feature type="modified residue" description="Phosphothreonine" evidence="35">
    <location>
        <position position="670"/>
    </location>
</feature>
<feature type="modified residue" description="Phosphoserine" evidence="57">
    <location>
        <position position="692"/>
    </location>
</feature>
<feature type="modified residue" description="Phosphoserine" evidence="1">
    <location>
        <position position="724"/>
    </location>
</feature>
<feature type="modified residue" description="Phosphoserine" evidence="57">
    <location>
        <position position="727"/>
    </location>
</feature>
<feature type="modified residue" description="Phosphoserine" evidence="56">
    <location>
        <position position="771"/>
    </location>
</feature>
<feature type="modified residue" description="Phosphoserine" evidence="52 54 55 56">
    <location>
        <position position="809"/>
    </location>
</feature>
<feature type="modified residue" description="Phosphoserine" evidence="1">
    <location>
        <position position="830"/>
    </location>
</feature>
<feature type="modified residue" description="Phosphoserine" evidence="17 51 52">
    <location>
        <position position="831"/>
    </location>
</feature>
<feature type="modified residue" description="Phosphoserine" evidence="49 53 56">
    <location>
        <position position="834"/>
    </location>
</feature>
<feature type="modified residue" description="Phosphothreonine" evidence="51">
    <location>
        <position position="855"/>
    </location>
</feature>
<feature type="modified residue" description="Phosphothreonine" evidence="54 56">
    <location>
        <position position="922"/>
    </location>
</feature>
<feature type="modified residue" description="Phosphoserine" evidence="54">
    <location>
        <position position="970"/>
    </location>
</feature>
<feature type="modified residue" description="Phosphoserine" evidence="54">
    <location>
        <position position="975"/>
    </location>
</feature>
<feature type="modified residue" description="Phosphoserine" evidence="17 52 53 54 55 56">
    <location>
        <position position="1028"/>
    </location>
</feature>
<feature type="modified residue" description="Phosphothreonine" evidence="56">
    <location>
        <position position="1056"/>
    </location>
</feature>
<feature type="modified residue" description="Phosphoserine" evidence="54 56">
    <location>
        <position position="1068"/>
    </location>
</feature>
<feature type="modified residue" description="Phosphoserine" evidence="17">
    <location>
        <position position="1086"/>
    </location>
</feature>
<feature type="modified residue" description="Phosphoserine" evidence="50 52 56">
    <location>
        <position position="1094"/>
    </location>
</feature>
<feature type="modified residue" description="Phosphoserine" evidence="55">
    <location>
        <position position="1101"/>
    </location>
</feature>
<feature type="modified residue" description="Phosphoserine" evidence="17 53 54 55 56 57">
    <location>
        <position position="1114"/>
    </location>
</feature>
<feature type="modified residue" description="Phosphoserine" evidence="56">
    <location>
        <position position="1148"/>
    </location>
</feature>
<feature type="modified residue" description="Phosphothreonine" evidence="51">
    <location>
        <position position="1214"/>
    </location>
</feature>
<feature type="modified residue" description="Phosphoserine" evidence="51 52 56 57">
    <location>
        <position position="1216"/>
    </location>
</feature>
<feature type="modified residue" description="Phosphoserine" evidence="17 50 51 52 56">
    <location>
        <position position="1219"/>
    </location>
</feature>
<feature type="modified residue" description="Phosphoserine" evidence="56">
    <location>
        <position position="1317"/>
    </location>
</feature>
<feature type="modified residue" description="Phosphoserine" evidence="56">
    <location>
        <position position="1342"/>
    </location>
</feature>
<feature type="modified residue" description="Omega-N-methylarginine" evidence="1">
    <location>
        <position position="1355"/>
    </location>
</feature>
<feature type="modified residue" description="Phosphoserine" evidence="50 54 55 56 57">
    <location>
        <position position="1362"/>
    </location>
</feature>
<feature type="modified residue" description="Phosphoserine" evidence="52">
    <location>
        <position position="1368"/>
    </location>
</feature>
<feature type="modified residue" description="Phosphothreonine" evidence="52">
    <location>
        <position position="1372"/>
    </location>
</feature>
<feature type="modified residue" description="Phosphoserine" evidence="49 52 53 54 56">
    <location>
        <position position="1426"/>
    </location>
</feature>
<feature type="modified residue" description="Phosphoserine" evidence="52 53 54 55 56">
    <location>
        <position position="1430"/>
    </location>
</feature>
<feature type="modified residue" description="Phosphoserine" evidence="53">
    <location>
        <position position="1460"/>
    </location>
</feature>
<feature type="modified residue" description="Phosphoserine" evidence="52 53 56">
    <location>
        <position position="1462"/>
    </location>
</feature>
<feature type="modified residue" description="Phosphoserine" evidence="53">
    <location>
        <position position="1474"/>
    </location>
</feature>
<feature type="modified residue" description="Phosphothreonine" evidence="30 52 54 56">
    <location>
        <position position="1609"/>
    </location>
</feature>
<feature type="modified residue" description="Phosphoserine" evidence="30 54 55 56">
    <location>
        <position position="1618"/>
    </location>
</feature>
<feature type="modified residue" description="Phosphoserine" evidence="1">
    <location>
        <position position="1631"/>
    </location>
</feature>
<feature type="modified residue" description="Phosphoserine" evidence="56">
    <location>
        <position position="1635"/>
    </location>
</feature>
<feature type="modified residue" description="Phosphothreonine" evidence="56">
    <location>
        <position position="1638"/>
    </location>
</feature>
<feature type="modified residue" description="Phosphothreonine" evidence="56">
    <location>
        <position position="1648"/>
    </location>
</feature>
<feature type="modified residue" description="Phosphoserine" evidence="56">
    <location>
        <position position="1656"/>
    </location>
</feature>
<feature type="modified residue" description="Phosphoserine" evidence="56">
    <location>
        <position position="1673"/>
    </location>
</feature>
<feature type="modified residue" description="Phosphoserine" evidence="50 54 55 56">
    <location>
        <position position="1678"/>
    </location>
</feature>
<feature type="modified residue" description="Phosphoserine" evidence="52 56">
    <location>
        <position position="1701"/>
    </location>
</feature>
<feature type="modified residue" description="Phosphoserine" evidence="52">
    <location>
        <position position="1759"/>
    </location>
</feature>
<feature type="modified residue" description="Phosphoserine" evidence="19 23">
    <location>
        <position position="1778"/>
    </location>
</feature>
<feature type="cross-link" description="Glycyl lysine isopeptide (Lys-Gly) (interchain with G-Cter in SUMO1); alternate" evidence="58">
    <location>
        <position position="217"/>
    </location>
</feature>
<feature type="cross-link" description="Glycyl lysine isopeptide (Lys-Gly) (interchain with G-Cter in SUMO2); alternate" evidence="58 62">
    <location>
        <position position="217"/>
    </location>
</feature>
<feature type="cross-link" description="Glycyl lysine isopeptide (Lys-Gly) (interchain with G-Cter in SUMO1); alternate" evidence="58">
    <location>
        <position position="868"/>
    </location>
</feature>
<feature type="cross-link" description="Glycyl lysine isopeptide (Lys-Gly) (interchain with G-Cter in SUMO2); alternate" evidence="62">
    <location>
        <position position="868"/>
    </location>
</feature>
<feature type="cross-link" description="Glycyl lysine isopeptide (Lys-Gly) (interchain with G-Cter in SUMO2)" evidence="59 61 62">
    <location>
        <position position="930"/>
    </location>
</feature>
<feature type="cross-link" description="Glycyl lysine isopeptide (Lys-Gly) (interchain with G-Cter in SUMO2)" evidence="62">
    <location>
        <position position="984"/>
    </location>
</feature>
<feature type="cross-link" description="Glycyl lysine isopeptide (Lys-Gly) (interchain with G-Cter in SUMO2)" evidence="62">
    <location>
        <position position="1365"/>
    </location>
</feature>
<feature type="cross-link" description="Glycyl lysine isopeptide (Lys-Gly) (interchain with G-Cter in SUMO1); alternate" evidence="58">
    <location>
        <position position="1434"/>
    </location>
</feature>
<feature type="cross-link" description="Glycyl lysine isopeptide (Lys-Gly) (interchain with G-Cter in SUMO2); alternate" evidence="58 62">
    <location>
        <position position="1434"/>
    </location>
</feature>
<feature type="cross-link" description="Glycyl lysine isopeptide (Lys-Gly) (interchain with G-Cter in SUMO1); alternate" evidence="58">
    <location>
        <position position="1563"/>
    </location>
</feature>
<feature type="cross-link" description="Glycyl lysine isopeptide (Lys-Gly) (interchain with G-Cter in SUMO2); alternate" evidence="58 59 60 62">
    <location>
        <position position="1563"/>
    </location>
</feature>
<feature type="cross-link" description="Glycyl lysine isopeptide (Lys-Gly) (interchain with G-Cter in ubiquitin)" evidence="29">
    <location>
        <position position="1685"/>
    </location>
</feature>
<feature type="splice variant" id="VSP_018390" description="In isoform 2 and isoform 3." evidence="40 42">
    <original>M</original>
    <variation>MPGEQM</variation>
    <location>
        <position position="1"/>
    </location>
</feature>
<feature type="splice variant" id="VSP_055062" description="In isoform 3." evidence="42">
    <location>
        <begin position="1692"/>
        <end position="1693"/>
    </location>
</feature>
<feature type="sequence variant" id="VAR_022172" description="In dbSNP:rs560191." evidence="18 39">
    <original>D</original>
    <variation>E</variation>
    <location>
        <position position="353"/>
    </location>
</feature>
<feature type="sequence variant" id="VAR_022173" description="In dbSNP:rs689647." evidence="18 39">
    <original>G</original>
    <variation>S</variation>
    <location>
        <position position="412"/>
    </location>
</feature>
<feature type="sequence variant" id="VAR_022174" description="In dbSNP:rs45443496." evidence="39">
    <original>M</original>
    <variation>V</variation>
    <location>
        <position position="648"/>
    </location>
</feature>
<feature type="sequence variant" id="VAR_022175" description="In dbSNP:rs34823068." evidence="39">
    <original>Q</original>
    <variation>R</variation>
    <location>
        <position position="699"/>
    </location>
</feature>
<feature type="sequence variant" id="VAR_034558" description="In dbSNP:rs34185035.">
    <original>D</original>
    <variation>G</variation>
    <location>
        <position position="841"/>
    </location>
</feature>
<feature type="sequence variant" id="VAR_022176" description="In dbSNP:rs45470395." evidence="39">
    <original>E</original>
    <variation>G</variation>
    <location>
        <position position="1014"/>
    </location>
</feature>
<feature type="sequence variant" id="VAR_022177" description="In dbSNP:rs45482998." evidence="39">
    <original>V</original>
    <variation>A</variation>
    <location>
        <position position="1026"/>
    </location>
</feature>
<feature type="sequence variant" id="VAR_022178" description="In dbSNP:rs2602141." evidence="18 39">
    <original>K</original>
    <variation>Q</variation>
    <location>
        <position position="1136"/>
    </location>
</feature>
<feature type="sequence variant" id="VAR_034559" description="In dbSNP:rs34740611.">
    <original>E</original>
    <variation>K</variation>
    <location>
        <position position="1137"/>
    </location>
</feature>
<feature type="sequence variant" id="VAR_022179" description="In dbSNP:rs45500399." evidence="39">
    <original>A</original>
    <variation>G</variation>
    <location>
        <position position="1170"/>
    </location>
</feature>
<feature type="sequence variant" id="VAR_022180" description="In dbSNP:rs3803339." evidence="39">
    <original>I</original>
    <variation>V</variation>
    <location>
        <position position="1174"/>
    </location>
</feature>
<feature type="sequence variant" id="VAR_034560" description="In dbSNP:rs2230449.">
    <original>R</original>
    <variation>Q</variation>
    <location>
        <position position="1442"/>
    </location>
</feature>
<feature type="sequence variant" id="VAR_038689" description="In dbSNP:rs11554564.">
    <original>G</original>
    <variation>W</variation>
    <location>
        <position position="1488"/>
    </location>
</feature>
<feature type="mutagenesis site" description="In 28A: Defects in recruitment to double strand breaks (DSBs), abolished interaction with RIF1 and abolished ability to repair DSBs; when associated with A-13; A-25; A-29; A-105; A-166; A-176; A-178; A-302; A-437; A-452; A-523; A-543; A-580; A-625; A-674; A-696; A-698; A-784; A-831; A-855; A-892; A-1068; A-1086; A-1104; A-1148; A-1171 and A-1219. In 8A: Does not affect interaction with RIF1 and ability to promote immunoglobulin class-switch recombination (CSR), but abolishes interaction with PAXIP1 and ability to promote NHEJ of dysfunctional telomeres; when associated with A-13; A-25; A-29; A-105; A-166; A-176 and A-178." evidence="25 26 27">
    <original>S</original>
    <variation>A</variation>
    <location>
        <position position="6"/>
    </location>
</feature>
<feature type="mutagenesis site" description="In 28A: Defects in recruitment to double strand breaks (DSBs), abolished interaction with RIF1 and abolished ability to repair DSBs; when associated with A-6; A-25; A-29; A-105; A-166; A-176; A-178; A-302; A-437; A-452; A-523; A-543; A-580; A-625; A-674; A-696; A-698; A-784; A-831; A-855; A-892; A-1068; A-1086; A-1104; A-1148; A-1171 and A-1219. In 8A: Does not affect interaction with RIF1 and ability to promote immunoglobulin class-switch recombination (CSR), but abolishes interaction with PAXIP1 and ability to promote NHEJ of dysfunctional telomeres; when associated with A-6; A-25; A-29; A-105; A-166; A-176 and A-178." evidence="25 26 27">
    <original>S</original>
    <variation>A</variation>
    <location>
        <position position="13"/>
    </location>
</feature>
<feature type="mutagenesis site" description="In 28A: Defects in recruitment to double strand breaks (DSBs), abolished interaction with RIF1 and abolished ability to repair DSBs; when associated with A-6; A-13; A-29; A-105; A-166; A-176; A-178; A-302; A-437; A-452; A-523; A-543; A-580; A-625; A-674; A-696; A-698; A-784; A-831; A-855; A-892; A-1068; A-1086; A-1104; A-1148; A-1171 and A-1219. In 8A: Does not affect interaction with RIF1 and ability to promote immunoglobulin class-switch recombination (CSR), but abolishes interaction with PAXIP1 and ability to promote NHEJ of dysfunctional telomeres; when associated with A-6; A-13; A-29; A-105; A-166; A-176 and A-178." evidence="25 26 27">
    <original>S</original>
    <variation>A</variation>
    <location>
        <position position="25"/>
    </location>
</feature>
<feature type="mutagenesis site" description="In 28A: Defects in recruitment to double strand breaks (DSBs), abolished interaction with RIF1 and abolished ability to repair DSBs; when associated with A-6; A-13; A-25; A-105; A-166; A-176; A-178; A-302; A-437; A-452; A-523; A-543; A-580; A-625; A-674; A-696; A-698; A-784; A-831; A-855; A-892; A-1068; A-1086; A-1104; A-1148; A-1171 and A-1219. In 8A: Does not affect interaction with RIF1 and ability to promote immunoglobulin class-switch recombination (CSR), but abolishes interaction with PAXIP1 and ability to promote NHEJ of dysfunctional telomeres; when associated with A-6; A-13; A-25; A-105; A-166; A-176 and A-178." evidence="25 26 27">
    <original>S</original>
    <variation>A</variation>
    <location>
        <position position="29"/>
    </location>
</feature>
<feature type="mutagenesis site" description="In 28A: Defects in recruitment to double strand breaks (DSBs), abolished interaction with RIF1 and abolished ability to repair DSBs; when associated with A-6; A-13; A-25; A-29; A-166; A-176; A-178; A-302; A-437; A-452; A-523; A-543; A-580; A-625; A-674; A-696; A-698; A-784; A-831; A-855; A-892; A-1068; A-1086; A-1104; A-1148; A-1171 and A-1219. In 8A: Does not affect interaction with RIF1 and ability to promote immunoglobulin class-switch recombination (CSR), but abolishes interaction with PAXIP1 and ability to promote NHEJ of dysfunctional telomeres; when associated with A-6; A-13; A-25; A-29; A-166; A-176 and A-178." evidence="25 26 27">
    <original>S</original>
    <variation>A</variation>
    <location>
        <position position="105"/>
    </location>
</feature>
<feature type="mutagenesis site" description="In 28A: Defects in recruitment to double strand breaks (DSBs), abolished interaction with RIF1 and abolished ability to repair DSBs; when associated with A-6; A-13; A-25; A-29; A-105; A-176; A-178; A-302; A-437; A-452; A-523; A-543; A-580; A-625; A-674; A-696; A-698; A-784; A-831; A-855; A-892; A-1068; A-1086; A-1104; A-1148; A-1171 and A-1219. In 8A: Does not affect interaction with RIF1 and ability to promote immunoglobulin class-switch recombination (CSR), but abolishes interaction with PAXIP1 and ability to promote NHEJ of dysfunctional telomeres; when associated with A-6; A-13; A-25; A-29; A-105; A-176 and A-178." evidence="25 26 27">
    <original>S</original>
    <variation>A</variation>
    <location>
        <position position="166"/>
    </location>
</feature>
<feature type="mutagenesis site" description="Loss of phosphorylation site." evidence="17">
    <original>SQS</original>
    <variation>AQA</variation>
    <location>
        <begin position="176"/>
        <end position="178"/>
    </location>
</feature>
<feature type="mutagenesis site" description="In 28A: Defects in recruitment to double strand breaks (DSBs), abolished interaction with RIF1 and abolished ability to repair DSBs; when associated with A-6; A-13; A-25; A-29; A-105; A-166; A-178; A-302; A-437; A-452; A-523; A-543; A-580; A-625; A-674; A-696; A-698; A-784; A-831; A-855; A-892; A-1068; A-1086; A-1104; A-1148; A-1171 and A-1219. In 8A: Does not affect interaction with RIF1 and ability to promote immunoglobulin class-switch recombination (CSR), but abolishes interaction with PAXIP1 and ability to promote NHEJ of dysfunctional telomeres; when associated with A-6; A-13; A-25; A-29; A-105; A-166 and A-178." evidence="25 26 27">
    <original>S</original>
    <variation>A</variation>
    <location>
        <position position="176"/>
    </location>
</feature>
<feature type="mutagenesis site" description="In 28A: Defects in recruitment to double strand breaks (DSBs), abolished interaction with RIF1 and abolished ability to repair DSBs; when associated with A-6; A-13; A-25; A-29; A-105; A-166; A-176; A-302; A-437; A-452; A-523; A-543; A-580; A-625; A-674; A-696; A-698; A-784; A-831; A-855; A-892; A-1068; A-1086; A-1104; A-1148; A-1171 and A-1219. In 8A: Does not affect interaction with RIF1 and ability to promote immunoglobulin class-switch recombination (CSR), but abolishes interaction with PAXIP1 and ability to promote NHEJ of dysfunctional telomeres; when associated with A-6; A-13; A-25; A-29; A-105; A-166 and A-176." evidence="25 26 27">
    <original>S</original>
    <variation>A</variation>
    <location>
        <position position="178"/>
    </location>
</feature>
<feature type="mutagenesis site" description="In 28A: Defects in recruitment to double strand breaks (DSBs), abolished interaction with RIF1 and abolished ability to repair DSBs; when associated with A-6; A-13; A-25; A-29; A-105; A-166; A-176; A-178; A-437; A-452; A-523; A-543; A-580; A-625; A-674; A-696; A-698; A-784; A-831; A-855; A-892; A-1068; A-1086; A-1104; A-1148; A-1171 and A-1219." evidence="25 26">
    <original>T</original>
    <variation>A</variation>
    <location>
        <position position="302"/>
    </location>
</feature>
<feature type="mutagenesis site" description="Decreased interaction with TOPBP1." evidence="35">
    <original>S</original>
    <variation>A</variation>
    <location>
        <position position="366"/>
    </location>
</feature>
<feature type="mutagenesis site" description="In 28A: Defects in recruitment to double strand breaks (DSBs), abolished interaction with RIF1 and abolished ability to repair DSBs; when associated with A-6; A-13; A-25; A-29; A-105; A-166; A-176; A-178; A-302; A-452; A-523; A-543; A-580; A-625; A-674; A-696; A-698; A-784; A-831; A-855; A-892; A-1068; A-1086; A-1104; A-1148; A-1171 and A-1219." evidence="25 26">
    <original>S</original>
    <variation>A</variation>
    <location>
        <position position="437"/>
    </location>
</feature>
<feature type="mutagenesis site" description="In 28A: Defects in recruitment to double strand breaks (DSBs), abolished interaction with RIF1 and abolished ability to repair DSBs; when associated with A-6; A-13; A-25; A-29; A-105; A-166; A-176; A-178; A-302; A-437; A-523; A-543; A-580; A-625; A-674; A-696; A-698; A-784; A-831; A-855; A-892; A-1068; A-1086; A-1104; A-1148; A-1171 and A-1219." evidence="25 26">
    <original>S</original>
    <variation>A</variation>
    <location>
        <position position="452"/>
    </location>
</feature>
<feature type="mutagenesis site" description="In 28A: Defects in recruitment to double strand breaks (DSBs), abolished interaction with RIF1 and abolished ability to repair DSBs; when associated with A-6; A-13; A-25; A-29; A-105; A-166; A-176; A-178; A-302; A-437; A-452; A-543; A-580; A-625; A-674; A-696; A-698; A-784; A-831; A-855; A-892; A-1068; A-1086; A-1104; A-1148; A-1171 and A-1219." evidence="25 26">
    <original>S</original>
    <variation>A</variation>
    <location>
        <position position="523"/>
    </location>
</feature>
<feature type="mutagenesis site" description="In 28A: Defects in recruitment to double strand breaks (DSBs), abolished interaction with RIF1 and abolished ability to repair DSBs; when associated with A-6; A-13; A-25; A-29; A-105; A-166; A-176; A-178; A-302; A-437; A-452; A-523; A-580; A-625; A-674; A-696; A-698; A-784; A-831; A-855; A-892; A-1068; A-1086; A-1104; A-1148; A-1171 and A-1219." evidence="25 26">
    <original>T</original>
    <variation>A</variation>
    <location>
        <position position="543"/>
    </location>
</feature>
<feature type="mutagenesis site" description="In 28A: Defects in recruitment to double strand breaks (DSBs), abolished interaction with RIF1 and abolished ability to repair DSBs; when associated with A-6; A-13; A-25; A-29; A-105; A-166; A-176; A-178; A-302; A-437; A-452; A-523; A-543; A-625; A-674; A-696; A-698; A-784; A-831; A-855; A-892; A-1068; A-1086; A-1104; A-1148; A-1171 and A-1219." evidence="25 26">
    <original>S</original>
    <variation>A</variation>
    <location>
        <position position="580"/>
    </location>
</feature>
<feature type="mutagenesis site" description="In 28A: Defects in recruitment to double strand breaks (DSBs), abolished interaction with RIF1 and abolished ability to repair DSBs; when associated with A-6; A-13; A-25; A-29; A-105; A-166; A-176; A-178; A-302; A-437; A-452; A-523; A-543; A-580; A-674; A-696; A-698; A-784; A-831; A-855; A-892; A-1068; A-1086; A-1104; A-1148; A-1171 and A-1219." evidence="25 26">
    <original>S</original>
    <variation>A</variation>
    <location>
        <position position="625"/>
    </location>
</feature>
<feature type="mutagenesis site" description="Decreased interaction with TOPBP1." evidence="35">
    <original>T</original>
    <variation>A</variation>
    <location>
        <position position="670"/>
    </location>
</feature>
<feature type="mutagenesis site" description="In 28A: Defects in recruitment to double strand breaks (DSBs), abolished interaction with RIF1 and abolished ability to repair DSBs; when associated with A-6; A-13; A-25; A-29; A-105; A-166; A-176; A-178; A-302; A-437; A-452; A-523; A-543; A-580; A-625; A-696; A-698; A-784; A-831; A-855; A-892; A-1068; A-1086; A-1104; A-1148; A-1171 and A-1219." evidence="25 26">
    <original>S</original>
    <variation>A</variation>
    <location>
        <position position="674"/>
    </location>
</feature>
<feature type="mutagenesis site" description="In 28A: Defects in recruitment to double strand breaks (DSBs), abolished interaction with RIF1 and abolished ability to repair DSBs; when associated with A-6; A-13; A-25; A-29; A-105; A-166; A-176; A-178; A-302; A-437; A-452; A-523; A-543; A-580; A-625; A-674; A-698; A-784; A-831; A-855; A-892; A-1068; A-1086; A-1104; A-1148; A-1171 and A-1219." evidence="25 26">
    <original>T</original>
    <variation>A</variation>
    <location>
        <position position="696"/>
    </location>
</feature>
<feature type="mutagenesis site" description="In 28A: Defects in recruitment to double strand breaks (DSBs), abolished interaction with RIF1 and abolished ability to repair DSBs; when associated with A-6; A-13; A-25; A-29; A-105; A-166; A-176; A-178; A-302; A-437; A-452; A-523; A-543; A-580; A-625; A-674; A-696; A-784; A-831; A-855; A-892; A-1068; A-1086; A-1104; A-1148; A-1171 and A-1219." evidence="25 26">
    <original>S</original>
    <variation>A</variation>
    <location>
        <position position="698"/>
    </location>
</feature>
<feature type="mutagenesis site" description="In 28A: Defects in recruitment to double strand breaks (DSBs), abolished interaction with RIF1 and abolished ability to repair DSBs; when associated with A-6; A-13; A-25; A-29; A-105; A-166; A-176; A-178; A-302; A-437; A-452; A-523; A-543; A-580; A-625; A-674; A-696; A-698; A-831; A-855; A-892; A-1068; A-1086; A-1104; A-1148; A-1171 and A-1219." evidence="25 26">
    <original>S</original>
    <variation>A</variation>
    <location>
        <position position="784"/>
    </location>
</feature>
<feature type="mutagenesis site" description="In 28A: Defects in recruitment to double strand breaks (DSBs), abolished interaction with RIF1 and abolished ability to repair DSBs; when associated with A-6; A-13; A-25; A-29; A-105; A-166; A-176; A-178; A-302; A-437; A-452; A-523; A-543; A-580; A-625; A-674; A-696; A-698; A-784; A-855; A-892; A-1068; A-1086; A-1104; A-1148; A-1171 and A-1219." evidence="25 26">
    <original>S</original>
    <variation>A</variation>
    <location>
        <position position="831"/>
    </location>
</feature>
<feature type="mutagenesis site" description="In 28A: Defects in recruitment to double strand breaks (DSBs), abolished interaction with RIF1 and abolished ability to repair DSBs; when associated with A-6; A-13; A-25; A-29; A-105; A-166; A-176; A-178; A-302; A-437; A-452; A-523; A-543; A-580; A-625; A-674; A-696; A-698; A-784; A-831; A-892; A-1068; A-1086; A-1104; A-1148; A-1171 and A-1219." evidence="25 26">
    <original>T</original>
    <variation>A</variation>
    <location>
        <position position="855"/>
    </location>
</feature>
<feature type="mutagenesis site" description="In 28A: Defects in recruitment to double strand breaks (DSBs), abolished interaction with RIF1 and abolished ability to repair DSBs; when associated with A-6; A-13; A-25; A-29; A-105; A-166; A-176; A-178; A-302; A-437; A-452; A-523; A-543; A-580; A-625; A-674; A-696; A-698; A-784; A-831; A-855; A-1068; A-1086; A-1104; A-1148; A-1171 and A-1219." evidence="25 26">
    <original>S</original>
    <variation>A</variation>
    <location>
        <position position="892"/>
    </location>
</feature>
<feature type="mutagenesis site" description="In 28A: Defects in recruitment to double strand breaks (DSBs), abolished interaction with RIF1 and abolished ability to repair DSBs; when associated with A-6; A-13; A-25; A-29; A-105; A-166; A-176; A-178; A-302; A-437; A-452; A-523; A-543; A-580; A-625; A-674; A-696; A-698; A-784; A-831; A-855; A-892; A-1086; A-1104; A-1148; A-1171 and A-1219." evidence="25 26">
    <original>S</original>
    <variation>A</variation>
    <location>
        <position position="1068"/>
    </location>
</feature>
<feature type="mutagenesis site" description="In 28A: Defects in recruitment to double strand breaks (DSBs), abolished interaction with RIF1 and abolished ability to repair DSBs; when associated with A-6; A-13; A-25; A-29; A-105; A-166; A-176; A-178; A-302; A-437; A-452; A-523; A-543; A-580; A-625; A-674; A-696; A-698; A-784; A-831; A-855; A-892; A-1068; A-1104; A-1148; A-1171 and A-1219." evidence="25 26">
    <original>S</original>
    <variation>A</variation>
    <location>
        <position position="1086"/>
    </location>
</feature>
<feature type="mutagenesis site" description="In 28A: Defects in recruitment to double strand breaks (DSBs), abolished interaction with RIF1 and abolished ability to repair DSBs; when associated with A-6; A-13; A-25; A-29; A-105; A-166; A-176; A-178; A-302; A-437; A-452; A-523; A-543; A-580; A-625; A-674; A-696; A-698; A-784; A-831; A-855; A-892; A-1068; A-1086; A-1148; A-1171 and A-1219." evidence="25 26">
    <original>S</original>
    <variation>A</variation>
    <location>
        <position position="1104"/>
    </location>
</feature>
<feature type="mutagenesis site" description="In 28A: Defects in recruitment to double strand breaks (DSBs), abolished interaction with RIF1 and abolished ability to repair DSBs; when associated with A-6; A-13; A-25; A-29; A-105; A-166; A-176; A-178; A-302; A-437; A-452; A-523; A-543; A-580; A-625; A-674; A-696; A-698; A-784; A-831; A-855; A-892; A-1068; A-1086; A-1104; A-1171 and A-1219." evidence="25 26">
    <original>S</original>
    <variation>A</variation>
    <location>
        <position position="1148"/>
    </location>
</feature>
<feature type="mutagenesis site" description="In 28A: Defects in recruitment to double strand breaks (DSBs), abolished interaction with RIF1 and abolished ability to repair DSBs; when associated with A-6; A-13; A-25; A-29; A-105; A-166; A-176; A-178; A-302; A-437; A-452; A-523; A-543; A-580; A-625; A-674; A-696; A-698; A-784; A-831; A-855; A-892; A-1068; A-1086; A-1104; A-1148 and A-1219." evidence="25 26">
    <original>T</original>
    <variation>A</variation>
    <location>
        <position position="1171"/>
    </location>
</feature>
<feature type="mutagenesis site" description="In 28A: Defects in recruitment to double strand breaks (DSBs), abolished interaction with RIF1 and abolished ability to repair DSBs; when associated with A-6; A-13; A-25; A-29; A-105; A-166; A-176; A-178; A-302; A-437; A-452; A-523; A-543; A-580; A-625; A-674; A-696; A-698; A-784; A-831; A-855; A-892; A-1068; A-1086; A-1104; A-1148 and A-1171." evidence="25 26">
    <original>S</original>
    <variation>A</variation>
    <location>
        <position position="1219"/>
    </location>
</feature>
<feature type="mutagenesis site" description="Does not affect monoubiquitination by MSL2." evidence="29">
    <original>K</original>
    <variation>R</variation>
    <location>
        <position position="1268"/>
    </location>
</feature>
<feature type="mutagenesis site" description="No detectable effect on methylation by PRMT1 (in vitro). Loss of methylation; when associated with A-1398; A-1400; A-1401 and A-1403." evidence="14 15">
    <original>R</original>
    <variation>A</variation>
    <location>
        <position position="1396"/>
    </location>
</feature>
<feature type="mutagenesis site" description="No detectable effect on methylation by PRMT1 (in vitro)." evidence="14 15">
    <original>R</original>
    <variation>K</variation>
    <location>
        <position position="1396"/>
    </location>
</feature>
<feature type="mutagenesis site" description="No effect on in class-switch recombination (CSR)." evidence="26">
    <original>RGRR</original>
    <variation>AGAA</variation>
    <location>
        <begin position="1398"/>
        <end position="1401"/>
    </location>
</feature>
<feature type="mutagenesis site" description="No detectable effect on methylation by PRMT1 (in vitro). Loss of methylation; when associated with A-1396; A-1400; A-1401 and A-1403." evidence="14 15">
    <original>R</original>
    <variation>A</variation>
    <location>
        <position position="1398"/>
    </location>
</feature>
<feature type="mutagenesis site" description="Reduced methylation by PRMT1 (in vitro). Strongly reduced methylation; when associated with K-1400. Strongly reduced methylation; when associated with K-1401." evidence="14 15">
    <original>R</original>
    <variation>K</variation>
    <location>
        <position position="1398"/>
    </location>
</feature>
<feature type="mutagenesis site" description="No detectable effect on methylation by PRMT1 (in vitro). Loss of methylation; when associated with A-1396; A-1398; A-1401 and A-1403." evidence="14 15">
    <original>R</original>
    <variation>A</variation>
    <location>
        <position position="1400"/>
    </location>
</feature>
<feature type="mutagenesis site" description="Reduced methylation by PRMT1 (in vitro). Strongly reduced methylation; when associated with K-1398. Strongly reduced methylation; when associated with K-1401." evidence="14 15">
    <original>R</original>
    <variation>K</variation>
    <location>
        <position position="1400"/>
    </location>
</feature>
<feature type="mutagenesis site" description="No detectable effect on methylation by PRMT1 (in vitro). Loss of methylation; when associated with A-1396; A-1398; A-1400 and A-1403." evidence="14 15">
    <original>R</original>
    <variation>A</variation>
    <location>
        <position position="1401"/>
    </location>
</feature>
<feature type="mutagenesis site" description="Reduced methylation by PRMT1 (in vitro). Strongly reduced methylation; when associated with K-1398. Strongly reduced methylation; when associated with K-1400." evidence="14 15">
    <original>R</original>
    <variation>K</variation>
    <location>
        <position position="1401"/>
    </location>
</feature>
<feature type="mutagenesis site" description="No detectable effect on methylation by PRMT1 (in vitro). Loss of methylation; when associated with A-1396; A-1398; A-1400 and A-1401." evidence="14 15">
    <original>R</original>
    <variation>A</variation>
    <location>
        <position position="1403"/>
    </location>
</feature>
<feature type="mutagenesis site" description="No detectable effect on methylation by PRMT1 (in vitro)." evidence="14 15">
    <original>R</original>
    <variation>K</variation>
    <location>
        <position position="1403"/>
    </location>
</feature>
<feature type="mutagenesis site" description="Loss of interaction with histone H4 that has been dimethylated at 'Lys-20' (H4K20me2). Abolishes recruitment to double strand breaks. Loss of interaction with histone H4 that has been dimethylated at 'Lys-20' (H4K20me2). Abolishes recruitment to double strand breaks; when associated with A-1521." evidence="12 16 32">
    <original>W</original>
    <variation>A</variation>
    <variation>H</variation>
    <location>
        <position position="1495"/>
    </location>
</feature>
<feature type="mutagenesis site" description="No effect on recruitment to double strand breaks." evidence="12 16">
    <original>W</original>
    <variation>F</variation>
    <location>
        <position position="1495"/>
    </location>
</feature>
<feature type="mutagenesis site" description="Reduces recruitment to double strand breaks." evidence="12 16">
    <original>W</original>
    <variation>V</variation>
    <location>
        <position position="1495"/>
    </location>
</feature>
<feature type="mutagenesis site" description="Reduces affinity for histone H4 that has been dimethylated at 'Lys-20'." evidence="16">
    <original>Y</original>
    <variation>A</variation>
    <location>
        <position position="1500"/>
    </location>
</feature>
<feature type="mutagenesis site" description="Reduces affinity for histone H4 that has been dimethylated at 'Lys-20'." evidence="12 16">
    <original>Y</original>
    <variation>A</variation>
    <location>
        <position position="1502"/>
    </location>
</feature>
<feature type="mutagenesis site" description="Abolishes recruitment to double strand breaks." evidence="12 16">
    <original>Y</original>
    <variation>L</variation>
    <variation>Q</variation>
    <location>
        <position position="1502"/>
    </location>
</feature>
<feature type="mutagenesis site" description="Loss of interaction with histone H4 that has been dimethylated at 'Lys-20' (H4K20me2). Abolishes recruitment to double strand breaks. Loss of interaction with histone H4 that has been dimethylated at 'Lys-20' (H4K20me2). Abolishes recruitment to double strand breaks; when associated with A-1495." evidence="12 16 32">
    <original>D</original>
    <variation>A</variation>
    <location>
        <position position="1521"/>
    </location>
</feature>
<feature type="mutagenesis site" description="Abolishes recruitment to double strand breaks and induces defects in class-switch recombination (CSR)." evidence="12 16 26 28">
    <original>D</original>
    <variation>R</variation>
    <location>
        <position position="1521"/>
    </location>
</feature>
<feature type="mutagenesis site" description="Increases affinity for histone H4 that has been dimethylated at 'Lys-20'. No effect on recruitment to double strand breaks." evidence="16">
    <original>Y</original>
    <variation>A</variation>
    <location>
        <position position="1523"/>
    </location>
</feature>
<feature type="mutagenesis site" description="Decreases affinity for histone H4 that has been dimethylated at 'Lys-20'." evidence="16">
    <original>Y</original>
    <variation>S</variation>
    <location>
        <position position="1523"/>
    </location>
</feature>
<feature type="mutagenesis site" description="Does not affect monoubiquitination by MSL2." evidence="29">
    <original>K</original>
    <variation>R</variation>
    <location>
        <position position="1563"/>
    </location>
</feature>
<feature type="mutagenesis site" description="Constitutive recruitment to mitotic DNA lesions, leading to mitotic defects; when associated with A-1618." evidence="30">
    <original>T</original>
    <variation>A</variation>
    <location>
        <position position="1609"/>
    </location>
</feature>
<feature type="mutagenesis site" description="Phosphomimetic mutant that abolishes recruitment to double strand breaks; when associated with D-1618." evidence="30">
    <original>T</original>
    <variation>E</variation>
    <location>
        <position position="1609"/>
    </location>
</feature>
<feature type="mutagenesis site" description="Does not affect recruitment to double strand breaks." evidence="28">
    <original>K</original>
    <variation>A</variation>
    <location>
        <position position="1613"/>
    </location>
</feature>
<feature type="mutagenesis site" description="Does not affect recruitment to double strand breaks." evidence="28">
    <original>D</original>
    <variation>A</variation>
    <location>
        <position position="1616"/>
    </location>
</feature>
<feature type="mutagenesis site" description="Strongly reduced recruitment to double strand breaks. Defects in class-switch recombination (CSR)." evidence="28">
    <original>I</original>
    <variation>A</variation>
    <location>
        <position position="1617"/>
    </location>
</feature>
<feature type="mutagenesis site" description="Constitutive recruitment to mitotic DNA lesions, leading to mitotic defects; when associated with A-1609." evidence="30">
    <original>S</original>
    <variation>A</variation>
    <location>
        <position position="1618"/>
    </location>
</feature>
<feature type="mutagenesis site" description="Phosphomimetic mutant that abolishes recruitment to double strand breaks; when associated with E-1609." evidence="30">
    <original>S</original>
    <variation>D</variation>
    <location>
        <position position="1618"/>
    </location>
</feature>
<feature type="mutagenesis site" description="Strongly reduced recruitment to double strand breaks. Defects in class-switch recombination (CSR). Does not affect interaction with histone H4 dimethylated at 'Lys-20' (H4K20me2). Impaired interaction with histone H2A monoubiquitinated at 'Lys-15' (H2AK15ub)." evidence="28">
    <original>L</original>
    <variation>A</variation>
    <location>
        <position position="1619"/>
    </location>
</feature>
<feature type="mutagenesis site" description="Reduced recruitment to double strand breaks." evidence="28">
    <original>N</original>
    <variation>A</variation>
    <location>
        <position position="1621"/>
    </location>
</feature>
<feature type="mutagenesis site" description="Reduced recruitment to double strand breaks." evidence="28">
    <original>L</original>
    <variation>A</variation>
    <location>
        <position position="1622"/>
    </location>
</feature>
<feature type="mutagenesis site" description="Does not affect recruitment to double strand breaks." evidence="28">
    <original>E</original>
    <variation>A</variation>
    <location>
        <position position="1624"/>
    </location>
</feature>
<feature type="mutagenesis site" description="Reduced recruitment to double strand breaks." evidence="28">
    <original>R</original>
    <variation>A</variation>
    <location>
        <position position="1627"/>
    </location>
</feature>
<feature type="mutagenesis site" description="Abolished monoubiquitination by MSL2." evidence="29">
    <original>K</original>
    <variation>R</variation>
    <location>
        <position position="1685"/>
    </location>
</feature>
<feature type="sequence conflict" description="In Ref. 3; CAD97660." evidence="43" ref="3">
    <original>P</original>
    <variation>S</variation>
    <location>
        <position position="796"/>
    </location>
</feature>
<feature type="sequence conflict" description="In Ref. 3; CAD97660." evidence="43" ref="3">
    <original>Y</original>
    <variation>C</variation>
    <location>
        <position position="1600"/>
    </location>
</feature>
<feature type="sequence conflict" description="In Ref. 3; CAD97660." evidence="43" ref="3">
    <original>G</original>
    <variation>R</variation>
    <location>
        <position position="1958"/>
    </location>
</feature>
<feature type="turn" evidence="72">
    <location>
        <begin position="1483"/>
        <end position="1488"/>
    </location>
</feature>
<feature type="strand" evidence="71">
    <location>
        <begin position="1490"/>
        <end position="1493"/>
    </location>
</feature>
<feature type="turn" evidence="65">
    <location>
        <begin position="1496"/>
        <end position="1498"/>
    </location>
</feature>
<feature type="strand" evidence="71">
    <location>
        <begin position="1501"/>
        <end position="1509"/>
    </location>
</feature>
<feature type="turn" evidence="70">
    <location>
        <begin position="1511"/>
        <end position="1513"/>
    </location>
</feature>
<feature type="strand" evidence="71">
    <location>
        <begin position="1514"/>
        <end position="1519"/>
    </location>
</feature>
<feature type="strand" evidence="71">
    <location>
        <begin position="1524"/>
        <end position="1528"/>
    </location>
</feature>
<feature type="helix" evidence="71">
    <location>
        <begin position="1529"/>
        <end position="1531"/>
    </location>
</feature>
<feature type="strand" evidence="66">
    <location>
        <begin position="1532"/>
        <end position="1535"/>
    </location>
</feature>
<feature type="strand" evidence="71">
    <location>
        <begin position="1543"/>
        <end position="1547"/>
    </location>
</feature>
<feature type="strand" evidence="69">
    <location>
        <begin position="1548"/>
        <end position="1550"/>
    </location>
</feature>
<feature type="strand" evidence="71">
    <location>
        <begin position="1551"/>
        <end position="1564"/>
    </location>
</feature>
<feature type="strand" evidence="71">
    <location>
        <begin position="1567"/>
        <end position="1574"/>
    </location>
</feature>
<feature type="strand" evidence="71">
    <location>
        <begin position="1577"/>
        <end position="1582"/>
    </location>
</feature>
<feature type="helix" evidence="71">
    <location>
        <begin position="1583"/>
        <end position="1585"/>
    </location>
</feature>
<feature type="strand" evidence="71">
    <location>
        <begin position="1586"/>
        <end position="1588"/>
    </location>
</feature>
<feature type="helix" evidence="71">
    <location>
        <begin position="1590"/>
        <end position="1600"/>
    </location>
</feature>
<feature type="strand" evidence="68">
    <location>
        <begin position="1615"/>
        <end position="1617"/>
    </location>
</feature>
<feature type="turn" evidence="67">
    <location>
        <begin position="1674"/>
        <end position="1676"/>
    </location>
</feature>
<feature type="helix" evidence="64">
    <location>
        <begin position="1715"/>
        <end position="1719"/>
    </location>
</feature>
<feature type="turn" evidence="64">
    <location>
        <begin position="1726"/>
        <end position="1731"/>
    </location>
</feature>
<feature type="strand" evidence="64">
    <location>
        <begin position="1732"/>
        <end position="1736"/>
    </location>
</feature>
<feature type="helix" evidence="63">
    <location>
        <begin position="1741"/>
        <end position="1745"/>
    </location>
</feature>
<feature type="helix" evidence="64">
    <location>
        <begin position="1773"/>
        <end position="1781"/>
    </location>
</feature>
<feature type="turn" evidence="64">
    <location>
        <begin position="1782"/>
        <end position="1784"/>
    </location>
</feature>
<feature type="turn" evidence="64">
    <location>
        <begin position="1793"/>
        <end position="1799"/>
    </location>
</feature>
<feature type="strand" evidence="64">
    <location>
        <begin position="1801"/>
        <end position="1808"/>
    </location>
</feature>
<feature type="helix" evidence="64">
    <location>
        <begin position="1813"/>
        <end position="1821"/>
    </location>
</feature>
<feature type="strand" evidence="64">
    <location>
        <begin position="1825"/>
        <end position="1827"/>
    </location>
</feature>
<feature type="helix" evidence="64">
    <location>
        <begin position="1829"/>
        <end position="1837"/>
    </location>
</feature>
<feature type="helix" evidence="64">
    <location>
        <begin position="1843"/>
        <end position="1845"/>
    </location>
</feature>
<feature type="strand" evidence="64">
    <location>
        <begin position="1851"/>
        <end position="1853"/>
    </location>
</feature>
<feature type="turn" evidence="64">
    <location>
        <begin position="1854"/>
        <end position="1857"/>
    </location>
</feature>
<feature type="strand" evidence="64">
    <location>
        <begin position="1858"/>
        <end position="1860"/>
    </location>
</feature>
<feature type="turn" evidence="64">
    <location>
        <begin position="1868"/>
        <end position="1871"/>
    </location>
</feature>
<feature type="strand" evidence="64">
    <location>
        <begin position="1873"/>
        <end position="1879"/>
    </location>
</feature>
<feature type="turn" evidence="64">
    <location>
        <begin position="1881"/>
        <end position="1884"/>
    </location>
</feature>
<feature type="helix" evidence="64">
    <location>
        <begin position="1885"/>
        <end position="1894"/>
    </location>
</feature>
<feature type="strand" evidence="64">
    <location>
        <begin position="1898"/>
        <end position="1908"/>
    </location>
</feature>
<feature type="helix" evidence="64">
    <location>
        <begin position="1914"/>
        <end position="1916"/>
    </location>
</feature>
<feature type="strand" evidence="64">
    <location>
        <begin position="1918"/>
        <end position="1922"/>
    </location>
</feature>
<feature type="helix" evidence="64">
    <location>
        <begin position="1928"/>
        <end position="1937"/>
    </location>
</feature>
<feature type="helix" evidence="64">
    <location>
        <begin position="1944"/>
        <end position="1953"/>
    </location>
</feature>
<feature type="helix" evidence="64">
    <location>
        <begin position="1963"/>
        <end position="1965"/>
    </location>
</feature>
<reference key="1">
    <citation type="journal article" date="1998" name="J. Biol. Chem.">
        <title>Stimulation of p53-mediated transcriptional activation by the p53-binding proteins, 53BP1 and 53BP2.</title>
        <authorList>
            <person name="Iwabuchi K."/>
            <person name="Li B."/>
            <person name="Massa H.F."/>
            <person name="Trask B.J."/>
            <person name="Date T."/>
            <person name="Fields S."/>
        </authorList>
    </citation>
    <scope>NUCLEOTIDE SEQUENCE [MRNA] (ISOFORM 1)</scope>
    <scope>SUBCELLULAR LOCATION</scope>
    <source>
        <tissue>Skeletal muscle</tissue>
    </source>
</reference>
<reference key="2">
    <citation type="submission" date="2005-03" db="EMBL/GenBank/DDBJ databases">
        <title>Preparation of a set of expression-ready clones of mammalian long cDNAs encoding large proteins by the ORF trap cloning method.</title>
        <authorList>
            <person name="Nakajima D."/>
            <person name="Saito K."/>
            <person name="Yamakawa H."/>
            <person name="Kikuno R.F."/>
            <person name="Nakayama M."/>
            <person name="Ohara R."/>
            <person name="Okazaki N."/>
            <person name="Koga H."/>
            <person name="Nagase T."/>
            <person name="Ohara O."/>
        </authorList>
    </citation>
    <scope>NUCLEOTIDE SEQUENCE [LARGE SCALE MRNA] (ISOFORM 3)</scope>
    <source>
        <tissue>Myeloid leukemia cell</tissue>
    </source>
</reference>
<reference key="3">
    <citation type="journal article" date="2007" name="BMC Genomics">
        <title>The full-ORF clone resource of the German cDNA consortium.</title>
        <authorList>
            <person name="Bechtel S."/>
            <person name="Rosenfelder H."/>
            <person name="Duda A."/>
            <person name="Schmidt C.P."/>
            <person name="Ernst U."/>
            <person name="Wellenreuther R."/>
            <person name="Mehrle A."/>
            <person name="Schuster C."/>
            <person name="Bahr A."/>
            <person name="Bloecker H."/>
            <person name="Heubner D."/>
            <person name="Hoerlein A."/>
            <person name="Michel G."/>
            <person name="Wedler H."/>
            <person name="Koehrer K."/>
            <person name="Ottenwaelder B."/>
            <person name="Poustka A."/>
            <person name="Wiemann S."/>
            <person name="Schupp I."/>
        </authorList>
    </citation>
    <scope>NUCLEOTIDE SEQUENCE [LARGE SCALE MRNA] (ISOFORM 2)</scope>
    <scope>VARIANTS GLU-353; SER-412 AND GLN-1136</scope>
    <source>
        <tissue>Cervix</tissue>
    </source>
</reference>
<reference key="4">
    <citation type="submission" date="2005-01" db="EMBL/GenBank/DDBJ databases">
        <authorList>
            <consortium name="NIEHS SNPs program"/>
        </authorList>
    </citation>
    <scope>NUCLEOTIDE SEQUENCE [GENOMIC DNA]</scope>
    <scope>VARIANTS GLU-353; SER-412; VAL-648; ARG-699; GLY-1014; ALA-1026; GLN-1136; GLY-1170 AND VAL-1174</scope>
</reference>
<reference key="5">
    <citation type="journal article" date="2006" name="Nature">
        <title>Analysis of the DNA sequence and duplication history of human chromosome 15.</title>
        <authorList>
            <person name="Zody M.C."/>
            <person name="Garber M."/>
            <person name="Sharpe T."/>
            <person name="Young S.K."/>
            <person name="Rowen L."/>
            <person name="O'Neill K."/>
            <person name="Whittaker C.A."/>
            <person name="Kamal M."/>
            <person name="Chang J.L."/>
            <person name="Cuomo C.A."/>
            <person name="Dewar K."/>
            <person name="FitzGerald M.G."/>
            <person name="Kodira C.D."/>
            <person name="Madan A."/>
            <person name="Qin S."/>
            <person name="Yang X."/>
            <person name="Abbasi N."/>
            <person name="Abouelleil A."/>
            <person name="Arachchi H.M."/>
            <person name="Baradarani L."/>
            <person name="Birditt B."/>
            <person name="Bloom S."/>
            <person name="Bloom T."/>
            <person name="Borowsky M.L."/>
            <person name="Burke J."/>
            <person name="Butler J."/>
            <person name="Cook A."/>
            <person name="DeArellano K."/>
            <person name="DeCaprio D."/>
            <person name="Dorris L. III"/>
            <person name="Dors M."/>
            <person name="Eichler E.E."/>
            <person name="Engels R."/>
            <person name="Fahey J."/>
            <person name="Fleetwood P."/>
            <person name="Friedman C."/>
            <person name="Gearin G."/>
            <person name="Hall J.L."/>
            <person name="Hensley G."/>
            <person name="Johnson E."/>
            <person name="Jones C."/>
            <person name="Kamat A."/>
            <person name="Kaur A."/>
            <person name="Locke D.P."/>
            <person name="Madan A."/>
            <person name="Munson G."/>
            <person name="Jaffe D.B."/>
            <person name="Lui A."/>
            <person name="Macdonald P."/>
            <person name="Mauceli E."/>
            <person name="Naylor J.W."/>
            <person name="Nesbitt R."/>
            <person name="Nicol R."/>
            <person name="O'Leary S.B."/>
            <person name="Ratcliffe A."/>
            <person name="Rounsley S."/>
            <person name="She X."/>
            <person name="Sneddon K.M.B."/>
            <person name="Stewart S."/>
            <person name="Sougnez C."/>
            <person name="Stone S.M."/>
            <person name="Topham K."/>
            <person name="Vincent D."/>
            <person name="Wang S."/>
            <person name="Zimmer A.R."/>
            <person name="Birren B.W."/>
            <person name="Hood L."/>
            <person name="Lander E.S."/>
            <person name="Nusbaum C."/>
        </authorList>
    </citation>
    <scope>NUCLEOTIDE SEQUENCE [LARGE SCALE GENOMIC DNA]</scope>
</reference>
<reference key="6">
    <citation type="journal article" date="2004" name="Genome Res.">
        <title>The status, quality, and expansion of the NIH full-length cDNA project: the Mammalian Gene Collection (MGC).</title>
        <authorList>
            <consortium name="The MGC Project Team"/>
        </authorList>
    </citation>
    <scope>NUCLEOTIDE SEQUENCE [LARGE SCALE MRNA] (ISOFORM 1)</scope>
    <source>
        <tissue>Cerebellum</tissue>
    </source>
</reference>
<reference key="7">
    <citation type="journal article" date="1994" name="Proc. Natl. Acad. Sci. U.S.A.">
        <title>Two cellular proteins that bind to wild-type but not mutant p53.</title>
        <authorList>
            <person name="Iwabuchi K."/>
            <person name="Bartel P.L."/>
            <person name="Li B."/>
            <person name="Marraccino R."/>
            <person name="Fields S."/>
        </authorList>
    </citation>
    <scope>NUCLEOTIDE SEQUENCE [MRNA] OF 946-1972</scope>
</reference>
<reference key="8">
    <citation type="journal article" date="2001" name="J. Biol. Chem.">
        <title>Negative cell cycle regulation and DNA-damage inducible phosphorylation of the BRCT protein 53BP1.</title>
        <authorList>
            <person name="Xia Z."/>
            <person name="Morales J.C."/>
            <person name="Dunphy W.G."/>
            <person name="Carpenter P.B."/>
        </authorList>
    </citation>
    <scope>PHOSPHORYLATION</scope>
</reference>
<reference key="9">
    <citation type="journal article" date="2001" name="J. Cell Biol.">
        <title>Tumor suppressor p53 binding protein 1 (53BP1) is involved in DNA damage-signaling pathways.</title>
        <authorList>
            <person name="Rappold I."/>
            <person name="Iwabuchi K."/>
            <person name="Date T."/>
            <person name="Chen J."/>
        </authorList>
    </citation>
    <scope>SUBCELLULAR LOCATION</scope>
    <scope>PHOSPHORYLATION</scope>
</reference>
<reference key="10">
    <citation type="journal article" date="2002" name="Science">
        <title>53BP1, a mediator of the DNA damage checkpoint.</title>
        <authorList>
            <person name="Wang B."/>
            <person name="Matsuoka S."/>
            <person name="Carpenter P.B."/>
            <person name="Elledge S.J."/>
        </authorList>
    </citation>
    <scope>FUNCTION IN DNA DAMAGE CHECKPOINT</scope>
    <scope>INTERACTION WITH CHEK2</scope>
</reference>
<reference key="11">
    <citation type="journal article" date="2003" name="J. Biol. Chem.">
        <title>Potential role for 53BP1 in DNA end-joining repair through direct interaction with DNA.</title>
        <authorList>
            <person name="Iwabuchi K."/>
            <person name="Basu B.P."/>
            <person name="Kysela B."/>
            <person name="Kurihara T."/>
            <person name="Shibata M."/>
            <person name="Guan D."/>
            <person name="Cao Y."/>
            <person name="Hamada T."/>
            <person name="Imamura K."/>
            <person name="Jeggo P.A."/>
            <person name="Date T."/>
            <person name="Doherty A.J."/>
        </authorList>
    </citation>
    <scope>SUBCELLULAR LOCATION</scope>
</reference>
<reference key="12">
    <citation type="journal article" date="2003" name="Nature">
        <title>MDC1 is a mediator of the mammalian DNA damage checkpoint.</title>
        <authorList>
            <person name="Stewart G.S."/>
            <person name="Wang B."/>
            <person name="Bignell C.R."/>
            <person name="Taylor A.M.R."/>
            <person name="Elledge S.J."/>
        </authorList>
    </citation>
    <scope>INTERACTION WITH H2AX</scope>
</reference>
<reference key="13">
    <citation type="journal article" date="2004" name="Cancer Res.">
        <title>p53-Binding protein 1 is fused to the platelet-derived growth factor receptor beta in a patient with a t(5;15)(q33;q22) and an imatinib-responsive eosinophilic myeloproliferative disorder.</title>
        <authorList>
            <person name="Grand F.H."/>
            <person name="Burgstaller S."/>
            <person name="Kuhr T."/>
            <person name="Baxter E.J."/>
            <person name="Webersinke G."/>
            <person name="Thaler J."/>
            <person name="Chase A.J."/>
            <person name="Cross N.C."/>
        </authorList>
    </citation>
    <scope>CHROMOSOMAL TRANSLOCATION WITH PDGFRB</scope>
</reference>
<reference key="14">
    <citation type="journal article" date="2004" name="Mol. Cell">
        <title>A pathway of double-strand break rejoining dependent upon ATM, Artemis, and proteins locating to gamma-H2AX foci.</title>
        <authorList>
            <person name="Riballo E."/>
            <person name="Kuehne M."/>
            <person name="Rief N."/>
            <person name="Doherty A."/>
            <person name="Smith G.C.M."/>
            <person name="Recio M.-J."/>
            <person name="Reis C."/>
            <person name="Dahm K."/>
            <person name="Fricke A."/>
            <person name="Krempler A."/>
            <person name="Parker A.R."/>
            <person name="Jackson S.P."/>
            <person name="Gennery A."/>
            <person name="Jeggo P.A."/>
            <person name="Loebrich M."/>
        </authorList>
    </citation>
    <scope>INTERACTION WITH DCLRE1C</scope>
</reference>
<reference key="15">
    <citation type="journal article" date="2005" name="Cell Cycle">
        <title>The GAR motif of 53BP1 is arginine methylated by PRMT1 and is necessary for 53BP1 DNA binding activity.</title>
        <authorList>
            <person name="Boisvert F.-M."/>
            <person name="Rhie A."/>
            <person name="Richard S."/>
            <person name="Doherty A.J."/>
        </authorList>
    </citation>
    <scope>METHYLATION</scope>
    <scope>MUTAGENESIS OF ARG-1396; ARG-1398; ARG-1400; ARG-1401 AND ARG-1403</scope>
    <scope>SUBCELLULAR LOCATION</scope>
    <scope>DNA-BINDING</scope>
</reference>
<reference key="16">
    <citation type="journal article" date="2005" name="Cell Cycle">
        <title>53BP1 oligomerization is independent of its methylation by PRMT1.</title>
        <authorList>
            <person name="Adams M.M."/>
            <person name="Wang B."/>
            <person name="Xia Z."/>
            <person name="Morales J.C."/>
            <person name="Lu X."/>
            <person name="Donehower L.A."/>
            <person name="Bochar D.A."/>
            <person name="Elledge S.J."/>
            <person name="Carpenter P.B."/>
        </authorList>
    </citation>
    <scope>METHYLATION</scope>
    <scope>MUTAGENESIS OF ARG-1396; ARG-1398; ARG-1400; ARG-1401 AND ARG-1403</scope>
    <scope>SUBUNIT</scope>
    <scope>SUBCELLULAR LOCATION</scope>
    <scope>DNA-BINDING</scope>
</reference>
<reference key="17">
    <citation type="journal article" date="2006" name="Cell">
        <title>Global, in vivo, and site-specific phosphorylation dynamics in signaling networks.</title>
        <authorList>
            <person name="Olsen J.V."/>
            <person name="Blagoev B."/>
            <person name="Gnad F."/>
            <person name="Macek B."/>
            <person name="Kumar C."/>
            <person name="Mortensen P."/>
            <person name="Mann M."/>
        </authorList>
    </citation>
    <scope>PHOSPHORYLATION [LARGE SCALE ANALYSIS] AT SER-222; SER-294; SER-500; SER-635; SER-639; SER-640; SER-1094; SER-1219; SER-1362 AND SER-1678</scope>
    <scope>IDENTIFICATION BY MASS SPECTROMETRY [LARGE SCALE ANALYSIS]</scope>
    <source>
        <tissue>Cervix carcinoma</tissue>
    </source>
</reference>
<reference key="18">
    <citation type="journal article" date="2006" name="Nat. Biotechnol.">
        <title>A probability-based approach for high-throughput protein phosphorylation analysis and site localization.</title>
        <authorList>
            <person name="Beausoleil S.A."/>
            <person name="Villen J."/>
            <person name="Gerber S.A."/>
            <person name="Rush J."/>
            <person name="Gygi S.P."/>
        </authorList>
    </citation>
    <scope>PHOSPHORYLATION [LARGE SCALE ANALYSIS] AT SER-834 AND SER-1426</scope>
    <scope>IDENTIFICATION BY MASS SPECTROMETRY [LARGE SCALE ANALYSIS]</scope>
    <source>
        <tissue>Cervix carcinoma</tissue>
    </source>
</reference>
<reference key="19">
    <citation type="journal article" date="2007" name="DNA Repair">
        <title>Characterisation of the sites of DNA damage-induced 53BP1 phosphorylation catalysed by ATM and ATR.</title>
        <authorList>
            <person name="Jowsey P."/>
            <person name="Morrice N.A."/>
            <person name="Hastie C.J."/>
            <person name="McLauchlan H."/>
            <person name="Toth R."/>
            <person name="Rouse J."/>
        </authorList>
    </citation>
    <scope>PHOSPHORYLATION AT SER-166; SER-176; SER-178; SER-294; THR-302; SER-380; SER-452; SER-523; SER-552; SER-831; SER-1028; SER-1086; SER-1114 AND SER-1219</scope>
    <scope>MUTAGENESIS OF 176-SER--SER-178</scope>
</reference>
<reference key="20">
    <citation type="journal article" date="2007" name="Science">
        <title>ATM and ATR substrate analysis reveals extensive protein networks responsive to DNA damage.</title>
        <authorList>
            <person name="Matsuoka S."/>
            <person name="Ballif B.A."/>
            <person name="Smogorzewska A."/>
            <person name="McDonald E.R. III"/>
            <person name="Hurov K.E."/>
            <person name="Luo J."/>
            <person name="Bakalarski C.E."/>
            <person name="Zhao Z."/>
            <person name="Solimini N."/>
            <person name="Lerenthal Y."/>
            <person name="Shiloh Y."/>
            <person name="Gygi S.P."/>
            <person name="Elledge S.J."/>
        </authorList>
    </citation>
    <scope>PHOSPHORYLATION [LARGE SCALE ANALYSIS] AT SER-105; THR-302; SER-523; THR-543; THR-548; SER-552; SER-831; THR-855; THR-1214; SER-1216 AND SER-1219</scope>
    <scope>IDENTIFICATION BY MASS SPECTROMETRY [LARGE SCALE ANALYSIS]</scope>
    <source>
        <tissue>Embryonic kidney</tissue>
    </source>
</reference>
<reference key="21">
    <citation type="journal article" date="2008" name="J. Proteome Res.">
        <title>Combining protein-based IMAC, peptide-based IMAC, and MudPIT for efficient phosphoproteomic analysis.</title>
        <authorList>
            <person name="Cantin G.T."/>
            <person name="Yi W."/>
            <person name="Lu B."/>
            <person name="Park S.K."/>
            <person name="Xu T."/>
            <person name="Lee J.-D."/>
            <person name="Yates J.R. III"/>
        </authorList>
    </citation>
    <scope>IDENTIFICATION BY MASS SPECTROMETRY [LARGE SCALE ANALYSIS]</scope>
    <source>
        <tissue>Cervix carcinoma</tissue>
    </source>
</reference>
<reference key="22">
    <citation type="journal article" date="2008" name="Proc. Natl. Acad. Sci. U.S.A.">
        <title>A quantitative atlas of mitotic phosphorylation.</title>
        <authorList>
            <person name="Dephoure N."/>
            <person name="Zhou C."/>
            <person name="Villen J."/>
            <person name="Beausoleil S.A."/>
            <person name="Bakalarski C.E."/>
            <person name="Elledge S.J."/>
            <person name="Gygi S.P."/>
        </authorList>
    </citation>
    <scope>PHOSPHORYLATION [LARGE SCALE ANALYSIS] AT SER-222; SER-265; SER-395; SER-398; SER-500; SER-523; SER-525; SER-552; SER-809; SER-831; SER-1028; SER-1094; SER-1216; SER-1219; SER-1368; THR-1372; SER-1426; SER-1430; SER-1462; THR-1609; SER-1701 AND SER-1759</scope>
    <scope>IDENTIFICATION BY MASS SPECTROMETRY [LARGE SCALE ANALYSIS]</scope>
    <source>
        <tissue>Cervix carcinoma</tissue>
    </source>
</reference>
<reference key="23">
    <citation type="journal article" date="2009" name="Anal. Chem.">
        <title>Lys-N and trypsin cover complementary parts of the phosphoproteome in a refined SCX-based approach.</title>
        <authorList>
            <person name="Gauci S."/>
            <person name="Helbig A.O."/>
            <person name="Slijper M."/>
            <person name="Krijgsveld J."/>
            <person name="Heck A.J."/>
            <person name="Mohammed S."/>
        </authorList>
    </citation>
    <scope>IDENTIFICATION BY MASS SPECTROMETRY [LARGE SCALE ANALYSIS]</scope>
</reference>
<reference key="24">
    <citation type="journal article" date="2009" name="J. Biol. Chem.">
        <title>Protein phosphatase 5 regulates the function of 53BP1 after neocarzinostatin-induced DNA damage.</title>
        <authorList>
            <person name="Kang Y."/>
            <person name="Lee J.H."/>
            <person name="Hoan N.N."/>
            <person name="Sohn H.M."/>
            <person name="Chang I.Y."/>
            <person name="You H.J."/>
        </authorList>
    </citation>
    <scope>PHOSPHORYLATION AT SER-25 AND SER-1778</scope>
    <scope>DEPHOSPHORYLATION AT SER-25 AND SER-1778 BY PPP5C</scope>
    <scope>SUBCELLULAR LOCATION</scope>
</reference>
<reference key="25">
    <citation type="journal article" date="2009" name="J. Virol.">
        <title>Functional interaction between Epstein-Barr virus replication protein Zta and host DNA damage response protein 53BP1.</title>
        <authorList>
            <person name="Bailey S.G."/>
            <person name="Verrall E."/>
            <person name="Schelcher C."/>
            <person name="Rhie A."/>
            <person name="Doherty A.J."/>
            <person name="Sinclair A.J."/>
        </authorList>
    </citation>
    <scope>INTERACTION WITH EPSTEIN-BARR VIRUS BZLF1 PROTEIN (MICROBIAL INFECTION)</scope>
</reference>
<reference key="26">
    <citation type="journal article" date="2009" name="J. Cell. Physiol.">
        <title>p8/nupr1 regulates DNA-repair activity after double-strand gamma irradiation-induced DNA damage.</title>
        <authorList>
            <person name="Gironella M."/>
            <person name="Malicet C."/>
            <person name="Cano C."/>
            <person name="Sandi M.J."/>
            <person name="Hamidi T."/>
            <person name="Tauil R.M."/>
            <person name="Baston M."/>
            <person name="Valaco P."/>
            <person name="Moreno S."/>
            <person name="Lopez F."/>
            <person name="Neira J.L."/>
            <person name="Dagorn J.C."/>
            <person name="Iovanna J.L."/>
        </authorList>
    </citation>
    <scope>INTERACTION WITH MSL1</scope>
</reference>
<reference key="27">
    <citation type="journal article" date="2009" name="Sci. Signal.">
        <title>Quantitative phosphoproteomic analysis of T cell receptor signaling reveals system-wide modulation of protein-protein interactions.</title>
        <authorList>
            <person name="Mayya V."/>
            <person name="Lundgren D.H."/>
            <person name="Hwang S.-I."/>
            <person name="Rezaul K."/>
            <person name="Wu L."/>
            <person name="Eng J.K."/>
            <person name="Rodionov V."/>
            <person name="Han D.K."/>
        </authorList>
    </citation>
    <scope>PHOSPHORYLATION [LARGE SCALE ANALYSIS] AT SER-294; SER-366; SER-380; SER-500; SER-523; SER-525; THR-543; SER-552; SER-834; SER-1028; SER-1114; SER-1426; SER-1430; SER-1460; SER-1462 AND SER-1474</scope>
    <scope>IDENTIFICATION BY MASS SPECTROMETRY [LARGE SCALE ANALYSIS]</scope>
    <source>
        <tissue>Leukemic T-cell</tissue>
    </source>
</reference>
<reference key="28">
    <citation type="journal article" date="2010" name="Mol. Cell">
        <title>Regulation of chromatin architecture by the PWWP domain-containing DNA damage-responsive factor EXPAND1/MUM1.</title>
        <authorList>
            <person name="Huen M.S."/>
            <person name="Huang J."/>
            <person name="Leung J.W."/>
            <person name="Sy S.M."/>
            <person name="Leung K.M."/>
            <person name="Ching Y.P."/>
            <person name="Tsao S.W."/>
            <person name="Chen J."/>
        </authorList>
    </citation>
    <scope>INTERACTION WITH PWWP3A</scope>
</reference>
<reference key="29">
    <citation type="journal article" date="2010" name="Sci. Signal.">
        <title>Quantitative phosphoproteomics reveals widespread full phosphorylation site occupancy during mitosis.</title>
        <authorList>
            <person name="Olsen J.V."/>
            <person name="Vermeulen M."/>
            <person name="Santamaria A."/>
            <person name="Kumar C."/>
            <person name="Miller M.L."/>
            <person name="Jensen L.J."/>
            <person name="Gnad F."/>
            <person name="Cox J."/>
            <person name="Jensen T.S."/>
            <person name="Nigg E.A."/>
            <person name="Brunak S."/>
            <person name="Mann M."/>
        </authorList>
    </citation>
    <scope>PHOSPHORYLATION [LARGE SCALE ANALYSIS] AT SER-124; SER-294; SER-500; SER-525; SER-552; SER-566; SER-580; SER-639; SER-640; SER-809; THR-922; SER-970; SER-975; SER-1028; SER-1068; SER-1114; SER-1362; SER-1426; SER-1430; THR-1609; SER-1618 AND SER-1678</scope>
    <scope>IDENTIFICATION BY MASS SPECTROMETRY [LARGE SCALE ANALYSIS]</scope>
    <source>
        <tissue>Cervix carcinoma</tissue>
    </source>
</reference>
<reference key="30">
    <citation type="journal article" date="2011" name="BMC Syst. Biol.">
        <title>Initial characterization of the human central proteome.</title>
        <authorList>
            <person name="Burkard T.R."/>
            <person name="Planyavsky M."/>
            <person name="Kaupe I."/>
            <person name="Breitwieser F.P."/>
            <person name="Buerckstuemmer T."/>
            <person name="Bennett K.L."/>
            <person name="Superti-Furga G."/>
            <person name="Colinge J."/>
        </authorList>
    </citation>
    <scope>IDENTIFICATION BY MASS SPECTROMETRY [LARGE SCALE ANALYSIS]</scope>
</reference>
<reference key="31">
    <citation type="journal article" date="2011" name="Biochem. Biophys. Res. Commun.">
        <title>Protein phosphatase 5 is necessary for ATR-mediated DNA repair.</title>
        <authorList>
            <person name="Kang Y."/>
            <person name="Cheong H.M."/>
            <person name="Lee J.H."/>
            <person name="Song P.I."/>
            <person name="Lee K.H."/>
            <person name="Kim S.Y."/>
            <person name="Jun J.Y."/>
            <person name="You H.J."/>
        </authorList>
    </citation>
    <scope>FUNCTION IN DNA DAMAGE RESPONSE</scope>
    <scope>PHOSPHORYLATION AT SER-1778</scope>
    <scope>SUBCELLULAR LOCATION</scope>
</reference>
<reference key="32">
    <citation type="journal article" date="2011" name="Sci. Signal.">
        <title>System-wide temporal characterization of the proteome and phosphoproteome of human embryonic stem cell differentiation.</title>
        <authorList>
            <person name="Rigbolt K.T."/>
            <person name="Prokhorova T.A."/>
            <person name="Akimov V."/>
            <person name="Henningsen J."/>
            <person name="Johansen P.T."/>
            <person name="Kratchmarova I."/>
            <person name="Kassem M."/>
            <person name="Mann M."/>
            <person name="Olsen J.V."/>
            <person name="Blagoev B."/>
        </authorList>
    </citation>
    <scope>PHOSPHORYLATION [LARGE SCALE ANALYSIS] AT SER-222; SER-294; SER-500; SER-525; SER-552; SER-809; SER-1028; SER-1101; SER-1114; SER-1362; SER-1430; SER-1618 AND SER-1678</scope>
    <scope>IDENTIFICATION BY MASS SPECTROMETRY [LARGE SCALE ANALYSIS]</scope>
</reference>
<reference key="33">
    <citation type="journal article" date="2012" name="J. Cell Sci.">
        <title>BRCA1-associated exclusion of 53BP1 from DNA damage sites underlies temporal control of DNA repair.</title>
        <authorList>
            <person name="Chapman J.R."/>
            <person name="Sossick A.J."/>
            <person name="Boulton S.J."/>
            <person name="Jackson S.P."/>
        </authorList>
    </citation>
    <scope>FUNCTION</scope>
</reference>
<reference key="34">
    <citation type="journal article" date="2013" name="Cell">
        <title>53BP1 mediates productive and mutagenic DNA repair through distinct phosphoprotein interactions.</title>
        <authorList>
            <person name="Callen E."/>
            <person name="Di Virgilio M."/>
            <person name="Kruhlak M.J."/>
            <person name="Nieto-Soler M."/>
            <person name="Wong N."/>
            <person name="Chen H.T."/>
            <person name="Faryabi R.B."/>
            <person name="Polato F."/>
            <person name="Santos M."/>
            <person name="Starnes L.M."/>
            <person name="Wesemann D.R."/>
            <person name="Lee J.E."/>
            <person name="Tubbs A."/>
            <person name="Sleckman B.P."/>
            <person name="Daniel J.A."/>
            <person name="Ge K."/>
            <person name="Alt F.W."/>
            <person name="Fernandez-Capetillo O."/>
            <person name="Nussenzweig M.C."/>
            <person name="Nussenzweig A."/>
        </authorList>
    </citation>
    <scope>FUNCTION</scope>
    <scope>PHOSPHORYLATION</scope>
    <scope>INTERACTION WITH RIF1 AND PAXIP1</scope>
    <scope>MUTAGENESIS OF SER-6; SER-13; SER-25; SER-29; SER-105; SER-166; SER-176 AND SER-178</scope>
</reference>
<reference key="35">
    <citation type="journal article" date="2013" name="J. Proteome Res.">
        <title>Toward a comprehensive characterization of a human cancer cell phosphoproteome.</title>
        <authorList>
            <person name="Zhou H."/>
            <person name="Di Palma S."/>
            <person name="Preisinger C."/>
            <person name="Peng M."/>
            <person name="Polat A.N."/>
            <person name="Heck A.J."/>
            <person name="Mohammed S."/>
        </authorList>
    </citation>
    <scope>PHOSPHORYLATION [LARGE SCALE ANALYSIS] AT SER-63; SER-124; SER-222; SER-265; SER-294; SER-366; SER-380; SER-398; SER-500; SER-507; SER-518; SER-523; SER-525; SER-552; SER-580; SER-771; SER-809; SER-834; THR-922; SER-1028; THR-1056; SER-1068; SER-1094; SER-1114; SER-1148; SER-1216; SER-1219; SER-1317; SER-1342; SER-1362; SER-1426; SER-1430; SER-1462; THR-1609; SER-1618; SER-1635; THR-1638; THR-1648; SER-1656; SER-1673; SER-1678 AND SER-1701</scope>
    <scope>IDENTIFICATION BY MASS SPECTROMETRY [LARGE SCALE ANALYSIS]</scope>
    <source>
        <tissue>Cervix carcinoma</tissue>
        <tissue>Erythroleukemia</tissue>
    </source>
</reference>
<reference key="36">
    <citation type="journal article" date="2013" name="Mol. Cell">
        <title>A cell cycle-dependent regulatory circuit composed of 53BP1-RIF1 and BRCA1-CtIP controls DNA repair pathway choice.</title>
        <authorList>
            <person name="Escribano-Diaz C."/>
            <person name="Orthwein A."/>
            <person name="Fradet-Turcotte A."/>
            <person name="Xing M."/>
            <person name="Young J.T."/>
            <person name="Tkac J."/>
            <person name="Cook M.A."/>
            <person name="Rosebrock A.P."/>
            <person name="Munro M."/>
            <person name="Canny M.D."/>
            <person name="Xu D."/>
            <person name="Durocher D."/>
        </authorList>
    </citation>
    <scope>FUNCTION</scope>
    <scope>SUBCELLULAR LOCATION</scope>
    <scope>INTERACTION WITH RIF1</scope>
    <scope>PHOSPHORYLATION</scope>
    <scope>MUTAGENESIS OF SER-6; SER-13; SER-25; SER-29; SER-105; SER-166; SER-176; SER-178; THR-302; SER-437; SER-452; SER-523; THR-543; SER-580; SER-625; SER-674; THR-696; SER-698; SER-784; SER-831; THR-855; SER-892; SER-1068; SER-1086; SER-1104; SER-1148; THR-1171 AND SER-1219</scope>
</reference>
<reference key="37">
    <citation type="journal article" date="2013" name="Nature">
        <title>53BP1 is a reader of the DNA-damage-induced H2A Lys 15 ubiquitin mark.</title>
        <authorList>
            <person name="Fradet-Turcotte A."/>
            <person name="Canny M.D."/>
            <person name="Escribano-Diaz C."/>
            <person name="Orthwein A."/>
            <person name="Leung C.C."/>
            <person name="Huang H."/>
            <person name="Landry M.C."/>
            <person name="Kitevski-LeBlanc J."/>
            <person name="Noordermeer S.M."/>
            <person name="Sicheri F."/>
            <person name="Durocher D."/>
        </authorList>
    </citation>
    <scope>FUNCTION</scope>
    <scope>SUBCELLULAR LOCATION</scope>
    <scope>SUBUNIT</scope>
    <scope>DOMAIN</scope>
    <scope>MUTAGENESIS OF ASP-1521; LYS-1613; ASP-1616; ILE-1617; LEU-1619; ASN-1621; LEU-1622; GLU-1624 AND ARG-1627</scope>
</reference>
<reference key="38">
    <citation type="journal article" date="2013" name="PLoS ONE">
        <title>Msl2 is a novel component of the vertebrate DNA damage response.</title>
        <authorList>
            <person name="Lai Z."/>
            <person name="Moravcova S."/>
            <person name="Canitrot Y."/>
            <person name="Andrzejewski L.P."/>
            <person name="Walshe D.M."/>
            <person name="Rea S."/>
        </authorList>
    </citation>
    <scope>UBIQUITINATION AT LYS-1685</scope>
    <scope>MUTAGENESIS OF LYS-1268; LYS-1563 AND LYS-1685</scope>
</reference>
<reference key="39">
    <citation type="journal article" date="2013" name="Proc. Natl. Acad. Sci. U.S.A.">
        <title>Role of 53BP1 oligomerization in regulating double-strand break repair.</title>
        <authorList>
            <person name="Lottersberger F."/>
            <person name="Bothmer A."/>
            <person name="Robbiani D.F."/>
            <person name="Nussenzweig M.C."/>
            <person name="de Lange T."/>
        </authorList>
    </citation>
    <scope>FUNCTION</scope>
    <scope>SUBUNIT</scope>
    <scope>MUTAGENESIS OF SER-6; SER-13; SER-25; SER-29; SER-105; SER-166; SER-176; SER-178; THR-302; SER-437; SER-452; SER-523; THR-543; SER-580; SER-625; SER-674; THR-696; SER-698; SER-784; SER-831; THR-855; SER-892; SER-1068; SER-1086; SER-1104; SER-1148; THR-1171; SER-1219; 1398-ARG--ARG-1401 AND ASP-1521</scope>
</reference>
<reference key="40">
    <citation type="journal article" date="2014" name="J. Proteomics">
        <title>An enzyme assisted RP-RPLC approach for in-depth analysis of human liver phosphoproteome.</title>
        <authorList>
            <person name="Bian Y."/>
            <person name="Song C."/>
            <person name="Cheng K."/>
            <person name="Dong M."/>
            <person name="Wang F."/>
            <person name="Huang J."/>
            <person name="Sun D."/>
            <person name="Wang L."/>
            <person name="Ye M."/>
            <person name="Zou H."/>
        </authorList>
    </citation>
    <scope>PHOSPHORYLATION [LARGE SCALE ANALYSIS] AT SER-294; SER-500; SER-552; SER-630; SER-692; SER-727; SER-1114; SER-1216 AND SER-1362</scope>
    <scope>IDENTIFICATION BY MASS SPECTROMETRY [LARGE SCALE ANALYSIS]</scope>
    <source>
        <tissue>Liver</tissue>
    </source>
</reference>
<reference key="41">
    <citation type="journal article" date="2014" name="Mol. Cell">
        <title>Dephosphorylation enables the recruitment of 53BP1 to double-strand DNA breaks.</title>
        <authorList>
            <person name="Lee D.H."/>
            <person name="Acharya S.S."/>
            <person name="Kwon M."/>
            <person name="Drane P."/>
            <person name="Guan Y."/>
            <person name="Adelmant G."/>
            <person name="Kalev P."/>
            <person name="Shah J."/>
            <person name="Pellman D."/>
            <person name="Marto J.A."/>
            <person name="Chowdhury D."/>
        </authorList>
    </citation>
    <scope>SUBCELLULAR LOCATION</scope>
    <scope>PHOSPHORYLATION AT THR-1609 AND SER-1618</scope>
    <scope>DOMAIN</scope>
    <scope>MUTAGENESIS OF THR-1609 AND SER-1618</scope>
</reference>
<reference key="42">
    <citation type="journal article" date="2014" name="Nat. Struct. Mol. Biol.">
        <title>Uncovering global SUMOylation signaling networks in a site-specific manner.</title>
        <authorList>
            <person name="Hendriks I.A."/>
            <person name="D'Souza R.C."/>
            <person name="Yang B."/>
            <person name="Verlaan-de Vries M."/>
            <person name="Mann M."/>
            <person name="Vertegaal A.C."/>
        </authorList>
    </citation>
    <scope>SUMOYLATION [LARGE SCALE ANALYSIS] AT LYS-930 AND LYS-1563</scope>
    <scope>IDENTIFICATION BY MASS SPECTROMETRY [LARGE SCALE ANALYSIS]</scope>
</reference>
<reference key="43">
    <citation type="journal article" date="2014" name="Proc. Natl. Acad. Sci. U.S.A.">
        <title>Mapping of SUMO sites and analysis of SUMOylation changes induced by external stimuli.</title>
        <authorList>
            <person name="Impens F."/>
            <person name="Radoshevich L."/>
            <person name="Cossart P."/>
            <person name="Ribet D."/>
        </authorList>
    </citation>
    <scope>SUMOYLATION [LARGE SCALE ANALYSIS] AT LYS-217; LYS-868; LYS-1434 AND LYS-1563</scope>
    <scope>IDENTIFICATION BY MASS SPECTROMETRY [LARGE SCALE ANALYSIS]</scope>
</reference>
<reference key="44">
    <citation type="journal article" date="2015" name="Cell Rep.">
        <title>SUMO-2 orchestrates chromatin modifiers in response to DNA damage.</title>
        <authorList>
            <person name="Hendriks I.A."/>
            <person name="Treffers L.W."/>
            <person name="Verlaan-de Vries M."/>
            <person name="Olsen J.V."/>
            <person name="Vertegaal A.C."/>
        </authorList>
    </citation>
    <scope>SUMOYLATION [LARGE SCALE ANALYSIS] AT LYS-930</scope>
    <scope>IDENTIFICATION BY MASS SPECTROMETRY [LARGE SCALE ANALYSIS]</scope>
</reference>
<reference key="45">
    <citation type="journal article" date="2015" name="Mol. Cell. Proteomics">
        <title>System-wide analysis of SUMOylation dynamics in response to replication stress reveals novel small ubiquitin-like modified target proteins and acceptor lysines relevant for genome stability.</title>
        <authorList>
            <person name="Xiao Z."/>
            <person name="Chang J.G."/>
            <person name="Hendriks I.A."/>
            <person name="Sigurdsson J.O."/>
            <person name="Olsen J.V."/>
            <person name="Vertegaal A.C."/>
        </authorList>
    </citation>
    <scope>SUMOYLATION [LARGE SCALE ANALYSIS] AT LYS-1563</scope>
    <scope>IDENTIFICATION BY MASS SPECTROMETRY [LARGE SCALE ANALYSIS]</scope>
</reference>
<reference key="46">
    <citation type="journal article" date="2016" name="Mol. Cell">
        <title>The TIP60 complex regulates bivalent chromatin recognition by 53BP1 through direct H4K20me binding and H2AK15 acetylation.</title>
        <authorList>
            <person name="Jacquet K."/>
            <person name="Fradet-Turcotte A."/>
            <person name="Avvakumov N."/>
            <person name="Lambert J.P."/>
            <person name="Roques C."/>
            <person name="Pandita R.K."/>
            <person name="Paquet E."/>
            <person name="Herst P."/>
            <person name="Gingras A.C."/>
            <person name="Pandita T.K."/>
            <person name="Legube G."/>
            <person name="Doyon Y."/>
            <person name="Durocher D."/>
            <person name="Cote J."/>
        </authorList>
    </citation>
    <scope>FUNCTION</scope>
</reference>
<reference key="47">
    <citation type="journal article" date="2017" name="Nat. Struct. Mol. Biol.">
        <title>Site-specific mapping of the human SUMO proteome reveals co-modification with phosphorylation.</title>
        <authorList>
            <person name="Hendriks I.A."/>
            <person name="Lyon D."/>
            <person name="Young C."/>
            <person name="Jensen L.J."/>
            <person name="Vertegaal A.C."/>
            <person name="Nielsen M.L."/>
        </authorList>
    </citation>
    <scope>SUMOYLATION [LARGE SCALE ANALYSIS] AT LYS-217; LYS-868; LYS-930; LYS-984; LYS-1365; LYS-1434 AND LYS-1563</scope>
    <scope>IDENTIFICATION BY MASS SPECTROMETRY [LARGE SCALE ANALYSIS]</scope>
</reference>
<reference key="48">
    <citation type="journal article" date="2017" name="Nature">
        <title>TIRR regulates 53BP1 by masking its histone methyl-lysine binding function.</title>
        <authorList>
            <person name="Drane P."/>
            <person name="Brault M.E."/>
            <person name="Cui G."/>
            <person name="Meghani K."/>
            <person name="Chaubey S."/>
            <person name="Detappe A."/>
            <person name="Parnandi N."/>
            <person name="He Y."/>
            <person name="Zheng X.F."/>
            <person name="Botuyan M.V."/>
            <person name="Kalousi A."/>
            <person name="Yewdell W.T."/>
            <person name="Muench C."/>
            <person name="Harper J.W."/>
            <person name="Chaudhuri J."/>
            <person name="Soutoglou E."/>
            <person name="Mer G."/>
            <person name="Chowdhury D."/>
        </authorList>
    </citation>
    <scope>FUNCTION</scope>
    <scope>INTERACTION WITH NUDT16L1 AND RIF1</scope>
    <scope>SUBCELLULAR LOCATION</scope>
    <scope>PHOSPHORYLATION</scope>
    <scope>MUTAGENESIS OF TRP-1495; ASP-1521; THR-1609 AND SER-1618</scope>
</reference>
<reference key="49">
    <citation type="journal article" date="2018" name="EMBO J.">
        <title>FAM35A associates with REV7 and modulates DNA damage responses of normal and BRCA1-defective cells.</title>
        <authorList>
            <person name="Tomida J."/>
            <person name="Takata K.I."/>
            <person name="Bhetawal S."/>
            <person name="Person M.D."/>
            <person name="Chao H.P."/>
            <person name="Tang D.G."/>
            <person name="Wood R.D."/>
        </authorList>
    </citation>
    <scope>INTERACTION WITH SHLD2</scope>
    <scope>IDENTIFICATION BY MASS SPECTROMETRY</scope>
</reference>
<reference key="50">
    <citation type="journal article" date="2018" name="Nat. Commun.">
        <title>GFI1 facilitates efficient DNA repair by regulating PRMT1 dependent methylation of MRE11 and 53BP1.</title>
        <authorList>
            <person name="Vadnais C."/>
            <person name="Chen R."/>
            <person name="Fraszczak J."/>
            <person name="Yu Z."/>
            <person name="Boulais J."/>
            <person name="Pinder J."/>
            <person name="Frank D."/>
            <person name="Khandanpour C."/>
            <person name="Hebert J."/>
            <person name="Dellaire G."/>
            <person name="Cote J.F."/>
            <person name="Richard S."/>
            <person name="Orthwein A."/>
            <person name="Drobetsky E."/>
            <person name="Moeroey T."/>
        </authorList>
    </citation>
    <scope>METHYLATION</scope>
    <scope>INTERACTION WITH GFI1</scope>
</reference>
<reference key="51">
    <citation type="journal article" date="2019" name="Sci. Rep.">
        <title>VRK1 functional insufficiency due to alterations in protein stability or kinase activity of human VRK1 pathogenic variants implicated in neuromotor syndromes.</title>
        <authorList>
            <person name="Martin-Doncel E."/>
            <person name="Rojas A.M."/>
            <person name="Cantarero L."/>
            <person name="Lazo P.A."/>
        </authorList>
    </citation>
    <scope>PHOSPHORYLATION BY VRK1</scope>
</reference>
<reference key="52">
    <citation type="journal article" date="2023" name="Nat. Struct. Mol. Biol.">
        <title>Dynamics of the DYNLL1-MRE11 complex regulate DNA end resection and recruitment of Shieldin to DSBs.</title>
        <authorList>
            <person name="Swift M.L."/>
            <person name="Zhou R."/>
            <person name="Syed A."/>
            <person name="Moreau L.A."/>
            <person name="Tomasik B."/>
            <person name="Tainer J.A."/>
            <person name="Konstantinopoulos P.A."/>
            <person name="D'Andrea A.D."/>
            <person name="He Y.J."/>
            <person name="Chowdhury D."/>
        </authorList>
    </citation>
    <scope>FUNCTION</scope>
    <scope>INTERACTION WITH DYNLL1</scope>
    <scope>SUBCELLULAR LOCATION</scope>
</reference>
<reference key="53">
    <citation type="journal article" date="2002" name="EMBO J.">
        <title>Crystal structure of human 53BP1 BRCT domains bound to p53 tumour suppressor.</title>
        <authorList>
            <person name="Derbyshire D.J."/>
            <person name="Basu B.P."/>
            <person name="Serpell L.C."/>
            <person name="Joo W.S."/>
            <person name="Date T."/>
            <person name="Iwabuchi K."/>
            <person name="Doherty A.J."/>
        </authorList>
    </citation>
    <scope>X-RAY CRYSTALLOGRAPHY (2.6 ANGSTROMS) OF 1722-1971 IN COMPLEX WITH TP53</scope>
</reference>
<reference key="54">
    <citation type="journal article" date="2002" name="Genes Dev.">
        <title>Structure of the 53BP1 BRCT region bound to p53 and its comparison to the Brca1 BRCT structure.</title>
        <authorList>
            <person name="Joo W.S."/>
            <person name="Jeffrey P.D."/>
            <person name="Cantor S.B."/>
            <person name="Finnin M.S."/>
            <person name="Livingston D.M."/>
            <person name="Pavletich N.P."/>
        </authorList>
    </citation>
    <scope>X-RAY CRYSTALLOGRAPHY (2.5 ANGSTROMS) OF 1714-1972 IN COMPLEX WITH TP53</scope>
</reference>
<reference key="55">
    <citation type="journal article" date="2004" name="Nature">
        <title>Methylated lysine 79 of histone H3 targets 53BP1 to DNA double-strand breaks.</title>
        <authorList>
            <person name="Huyen Y."/>
            <person name="Zgheib O."/>
            <person name="Ditullio R.A. Jr."/>
            <person name="Gorgoulis V.G."/>
            <person name="Zacharatos P."/>
            <person name="Petty T.J."/>
            <person name="Sheston E.A."/>
            <person name="Mellert H.S."/>
            <person name="Stavridi E.S."/>
            <person name="Halazonetis T.D."/>
        </authorList>
    </citation>
    <scope>X-RAY CRYSTALLOGRAPHY (2.8 ANGSTROMS) OF 1485-1602</scope>
    <scope>INTERACTION WITH METHYLATED HISTONE H3 AND HISTONE H4</scope>
    <scope>SUBCELLULAR LOCATION</scope>
    <scope>MUTAGENESIS OF TRP-1495; TYR-1502 AND ASP-1521</scope>
</reference>
<reference key="56">
    <citation type="journal article" date="2006" name="Cell">
        <title>Structural basis for the methylation state-specific recognition of histone H4-K20 by 53BP1 and Crb2 in DNA repair.</title>
        <authorList>
            <person name="Botuyan M.V."/>
            <person name="Lee J."/>
            <person name="Ward I.M."/>
            <person name="Kim J.-E."/>
            <person name="Thompson J.R."/>
            <person name="Chen J."/>
            <person name="Mer G."/>
        </authorList>
    </citation>
    <scope>X-RAY CRYSTALLOGRAPHY (1.25 ANGSTROMS) OF 1484-1603 IN COMPLEX WITH HISTONE H4</scope>
    <scope>SUBUNIT</scope>
    <scope>FUNCTION</scope>
    <scope>MUTAGENESIS OF TRP-1495; TYR-1500; TYR-1502; ASP-1521 AND TYR-1523</scope>
    <scope>SUBCELLULAR LOCATION</scope>
</reference>
<reference evidence="47 48" key="57">
    <citation type="journal article" date="2019" name="Elife">
        <title>Phosphorylation-mediated interactions with TOPBP1 couple 53BP1 and 9-1-1 to control the G1 DNA damage checkpoint.</title>
        <authorList>
            <person name="Bigot N."/>
            <person name="Day M."/>
            <person name="Baldock R.A."/>
            <person name="Watts F.Z."/>
            <person name="Oliver A.W."/>
            <person name="Pearl L.H."/>
        </authorList>
    </citation>
    <scope>X-RAY CRYSTALLOGRAPHY (2.81 ANGSTROMS) OF 663-677 IN COMPLEX WITH TOPBP1</scope>
    <scope>FUNCTION</scope>
    <scope>INTERACTION WITH TOPBP1</scope>
    <scope>PHOSPHORYLATION AT SER-366 AND THR-670</scope>
    <scope>MUTAGENESIS OF SER-366 AND THR-670</scope>
</reference>
<keyword id="KW-0002">3D-structure</keyword>
<keyword id="KW-0010">Activator</keyword>
<keyword id="KW-0025">Alternative splicing</keyword>
<keyword id="KW-0137">Centromere</keyword>
<keyword id="KW-0160">Chromosomal rearrangement</keyword>
<keyword id="KW-0158">Chromosome</keyword>
<keyword id="KW-0227">DNA damage</keyword>
<keyword id="KW-0234">DNA repair</keyword>
<keyword id="KW-0238">DNA-binding</keyword>
<keyword id="KW-0945">Host-virus interaction</keyword>
<keyword id="KW-1017">Isopeptide bond</keyword>
<keyword id="KW-0995">Kinetochore</keyword>
<keyword id="KW-0488">Methylation</keyword>
<keyword id="KW-0539">Nucleus</keyword>
<keyword id="KW-0597">Phosphoprotein</keyword>
<keyword id="KW-1267">Proteomics identification</keyword>
<keyword id="KW-1185">Reference proteome</keyword>
<keyword id="KW-0677">Repeat</keyword>
<keyword id="KW-0804">Transcription</keyword>
<keyword id="KW-0805">Transcription regulation</keyword>
<keyword id="KW-0832">Ubl conjugation</keyword>
<proteinExistence type="evidence at protein level"/>
<accession>Q12888</accession>
<accession>F8VY86</accession>
<accession>Q2M1Z7</accession>
<accession>Q4LE46</accession>
<accession>Q5FWZ3</accession>
<accession>Q7Z3U4</accession>
<comment type="function">
    <text evidence="1 8 16 23 24 25 26 27 28 31 32 35 37">Double-strand break (DSB) repair protein involved in response to DNA damage, telomere dynamics and class-switch recombination (CSR) during antibody genesis (PubMed:12364621, PubMed:17190600, PubMed:21144835, PubMed:22553214, PubMed:23333306, PubMed:27153538, PubMed:28241136, PubMed:31135337, PubMed:37696958). Plays a key role in the repair of double-strand DNA breaks (DSBs) in response to DNA damage by promoting non-homologous end joining (NHEJ)-mediated repair of DSBs and specifically counteracting the function of the homologous recombination (HR) repair protein BRCA1 (PubMed:22553214, PubMed:23333306, PubMed:23727112, PubMed:27153538, PubMed:31135337). In response to DSBs, phosphorylation by ATM promotes interaction with RIF1 and dissociation from NUDT16L1/TIRR, leading to recruitment to DSBs sites (PubMed:28241136). Recruited to DSBs sites by recognizing and binding histone H2A monoubiquitinated at 'Lys-15' (H2AK15Ub) and histone H4 dimethylated at 'Lys-20' (H4K20me2), two histone marks that are present at DSBs sites (PubMed:17190600, PubMed:23760478, PubMed:27153538, PubMed:28241136). Required for immunoglobulin class-switch recombination (CSR) during antibody genesis, a process that involves the generation of DNA DSBs (PubMed:23345425). Participates in the repair and the orientation of the broken DNA ends during CSR (By similarity). In contrast, it is not required for classic NHEJ and V(D)J recombination (By similarity). Promotes NHEJ of dysfunctional telomeres via interaction with PAXIP1 (PubMed:23727112).</text>
</comment>
<comment type="subunit">
    <text evidence="6 7 8 9 12 13 15 16 20 22 25 26 27 28 33 34 35 37">Homoligomer (PubMed:16294047, PubMed:23345425, PubMed:23760478). Interacts with p53/TP53 (via the central domain) (PubMed:11877378, PubMed:12110597). Interacts with DCLRE1C (PubMed:15574327). Interacts with histone H2AX and this requires phosphorylation of H2AX on 'Ser-139' (PubMed:12607005). Interacts with histone H4 that has been dimethylated at 'Lys-20' (H4K20me2) (PubMed:17190600). Has low affinity for histone H4 containing monomethylated 'Lys-20' (H4K20me1) (PubMed:17190600). Does not bind histone H4 containing unmethylated or trimethylated 'Lys-20' (H4K20me3) (PubMed:17190600). Has low affinity for histone H3 that has been dimethylated on 'Lys-79' (PubMed:15525939). Has very low affinity for histone H3 that has been monomethylated on 'Lys-79' (in vitro) (PubMed:15525939). Does not bind unmethylated histone H3 (PubMed:15525939). Interacts with histone H2A monoubiquitinated at 'Lys-15' (H2AK15Ub) (PubMed:23760478). Interacts with PWWP3A/EXPAND1 (PubMed:20347427). Interacts with CHEK2; modulates CHEK2 phosphorylation at 'Thr-68' in response to infrared (PubMed:12364621). Interacts with MSL1; this interaction may be required for MSL1 DNA repair activity, but not for histone acetyltransferase activity (PubMed:19650074). Interacts (when phosphorylated by ATM) with RIF1 (PubMed:23333306, PubMed:23727112, PubMed:28241136). Interacts (via the Tudor-like domain) with NUDT16L1/TIRR; interaction masks the Tudor-like domain and prevents recruitment to chromatin (PubMed:28241136). Interacts with PAXIP1 (PubMed:23727112). Interacts with SHLD2 (PubMed:29789392). Interacts (when phosphorylated) with TOPBP1 (PubMed:31135337). Interacts with GFI1; promoting methylation by PRMT1 (PubMed:29651020). Interacts with (phosphorylated) DYNLL1; specifically binds DYNLL1 phosphorylated at 'Ser-88' and promotes its recruitment to double stand breaks (DSBs) (PubMed:37696958).</text>
</comment>
<comment type="subunit">
    <text evidence="21">(Microbial infection) Interacts (via C-terminus) with Epstein-Barr virus lytic switch protein BZLF1 (via C-terminus); this interaction is involved in the activation of the viral lytic cycle.</text>
</comment>
<comment type="interaction">
    <interactant intactId="EBI-396540">
        <id>Q12888</id>
    </interactant>
    <interactant intactId="EBI-11954519">
        <id>Q49AR9</id>
        <label>ANKS1A</label>
    </interactant>
    <organismsDiffer>false</organismsDiffer>
    <experiments>3</experiments>
</comment>
<comment type="interaction">
    <interactant intactId="EBI-396540">
        <id>Q12888</id>
    </interactant>
    <interactant intactId="EBI-495465">
        <id>Q13315</id>
        <label>ATM</label>
    </interactant>
    <organismsDiffer>false</organismsDiffer>
    <experiments>2</experiments>
</comment>
<comment type="interaction">
    <interactant intactId="EBI-396540">
        <id>Q12888</id>
    </interactant>
    <interactant intactId="EBI-948169">
        <id>P13637</id>
        <label>ATP1A3</label>
    </interactant>
    <organismsDiffer>false</organismsDiffer>
    <experiments>3</experiments>
</comment>
<comment type="interaction">
    <interactant intactId="EBI-396540">
        <id>Q12888</id>
    </interactant>
    <interactant intactId="EBI-10988864">
        <id>P46379-2</id>
        <label>BAG6</label>
    </interactant>
    <organismsDiffer>false</organismsDiffer>
    <experiments>3</experiments>
</comment>
<comment type="interaction">
    <interactant intactId="EBI-396540">
        <id>Q12888</id>
    </interactant>
    <interactant intactId="EBI-765407">
        <id>P41182</id>
        <label>BCL6</label>
    </interactant>
    <organismsDiffer>false</organismsDiffer>
    <experiments>3</experiments>
</comment>
<comment type="interaction">
    <interactant intactId="EBI-396540">
        <id>Q12888</id>
    </interactant>
    <interactant intactId="EBI-349905">
        <id>P38398</id>
        <label>BRCA1</label>
    </interactant>
    <organismsDiffer>false</organismsDiffer>
    <experiments>5</experiments>
</comment>
<comment type="interaction">
    <interactant intactId="EBI-396540">
        <id>Q12888</id>
    </interactant>
    <interactant intactId="EBI-12809220">
        <id>Q5SWW7</id>
        <label>C10orf55</label>
    </interactant>
    <organismsDiffer>false</organismsDiffer>
    <experiments>3</experiments>
</comment>
<comment type="interaction">
    <interactant intactId="EBI-396540">
        <id>Q12888</id>
    </interactant>
    <interactant intactId="EBI-718729">
        <id>P55212</id>
        <label>CASP6</label>
    </interactant>
    <organismsDiffer>false</organismsDiffer>
    <experiments>3</experiments>
</comment>
<comment type="interaction">
    <interactant intactId="EBI-396540">
        <id>Q12888</id>
    </interactant>
    <interactant intactId="EBI-744556">
        <id>Q96HB5</id>
        <label>CCDC120</label>
    </interactant>
    <organismsDiffer>false</organismsDiffer>
    <experiments>3</experiments>
</comment>
<comment type="interaction">
    <interactant intactId="EBI-396540">
        <id>Q12888</id>
    </interactant>
    <interactant intactId="EBI-10192698">
        <id>Q02930-3</id>
        <label>CREB5</label>
    </interactant>
    <organismsDiffer>false</organismsDiffer>
    <experiments>3</experiments>
</comment>
<comment type="interaction">
    <interactant intactId="EBI-396540">
        <id>Q12888</id>
    </interactant>
    <interactant intactId="EBI-10976677">
        <id>G5E9A7</id>
        <label>DMWD</label>
    </interactant>
    <organismsDiffer>false</organismsDiffer>
    <experiments>3</experiments>
</comment>
<comment type="interaction">
    <interactant intactId="EBI-396540">
        <id>Q12888</id>
    </interactant>
    <interactant intactId="EBI-12593112">
        <id>O75190-2</id>
        <label>DNAJB6</label>
    </interactant>
    <organismsDiffer>false</organismsDiffer>
    <experiments>3</experiments>
</comment>
<comment type="interaction">
    <interactant intactId="EBI-396540">
        <id>Q12888</id>
    </interactant>
    <interactant intactId="EBI-395638">
        <id>O14645</id>
        <label>DNALI1</label>
    </interactant>
    <organismsDiffer>false</organismsDiffer>
    <experiments>3</experiments>
</comment>
<comment type="interaction">
    <interactant intactId="EBI-396540">
        <id>Q12888</id>
    </interactant>
    <interactant intactId="EBI-10968534">
        <id>P50570-2</id>
        <label>DNM2</label>
    </interactant>
    <organismsDiffer>false</organismsDiffer>
    <experiments>3</experiments>
</comment>
<comment type="interaction">
    <interactant intactId="EBI-396540">
        <id>Q12888</id>
    </interactant>
    <interactant intactId="EBI-494830">
        <id>P16104</id>
        <label>H2AX</label>
    </interactant>
    <organismsDiffer>false</organismsDiffer>
    <experiments>6</experiments>
</comment>
<comment type="interaction">
    <interactant intactId="EBI-396540">
        <id>Q12888</id>
    </interactant>
    <interactant intactId="EBI-354552">
        <id>P62807</id>
        <label>H2BC8</label>
    </interactant>
    <organismsDiffer>false</organismsDiffer>
    <experiments>6</experiments>
</comment>
<comment type="interaction">
    <interactant intactId="EBI-396540">
        <id>Q12888</id>
    </interactant>
    <interactant intactId="EBI-79722">
        <id>P68431</id>
        <label>H3C12</label>
    </interactant>
    <organismsDiffer>false</organismsDiffer>
    <experiments>5</experiments>
</comment>
<comment type="interaction">
    <interactant intactId="EBI-396540">
        <id>Q12888</id>
    </interactant>
    <interactant intactId="EBI-302023">
        <id>P62805</id>
        <label>H4C9</label>
    </interactant>
    <organismsDiffer>false</organismsDiffer>
    <experiments>14</experiments>
</comment>
<comment type="interaction">
    <interactant intactId="EBI-396540">
        <id>Q12888</id>
    </interactant>
    <interactant intactId="EBI-740220">
        <id>O14964</id>
        <label>HGS</label>
    </interactant>
    <organismsDiffer>false</organismsDiffer>
    <experiments>3</experiments>
</comment>
<comment type="interaction">
    <interactant intactId="EBI-396540">
        <id>Q12888</id>
    </interactant>
    <interactant intactId="EBI-352528">
        <id>P10809</id>
        <label>HSPD1</label>
    </interactant>
    <organismsDiffer>false</organismsDiffer>
    <experiments>3</experiments>
</comment>
<comment type="interaction">
    <interactant intactId="EBI-396540">
        <id>Q12888</id>
    </interactant>
    <interactant intactId="EBI-948266">
        <id>O14901</id>
        <label>KLF11</label>
    </interactant>
    <organismsDiffer>false</organismsDiffer>
    <experiments>3</experiments>
</comment>
<comment type="interaction">
    <interactant intactId="EBI-396540">
        <id>Q12888</id>
    </interactant>
    <interactant intactId="EBI-9478422">
        <id>Q96G42</id>
        <label>KLHDC7B</label>
    </interactant>
    <organismsDiffer>false</organismsDiffer>
    <experiments>3</experiments>
</comment>
<comment type="interaction">
    <interactant intactId="EBI-396540">
        <id>Q12888</id>
    </interactant>
    <interactant intactId="EBI-21591415">
        <id>P13473-2</id>
        <label>LAMP2</label>
    </interactant>
    <organismsDiffer>false</organismsDiffer>
    <experiments>3</experiments>
</comment>
<comment type="interaction">
    <interactant intactId="EBI-396540">
        <id>Q12888</id>
    </interactant>
    <interactant intactId="EBI-748397">
        <id>P50222</id>
        <label>MEOX2</label>
    </interactant>
    <organismsDiffer>false</organismsDiffer>
    <experiments>3</experiments>
</comment>
<comment type="interaction">
    <interactant intactId="EBI-396540">
        <id>Q12888</id>
    </interactant>
    <interactant intactId="EBI-78670">
        <id>Q14686</id>
        <label>NCOA6</label>
    </interactant>
    <organismsDiffer>false</organismsDiffer>
    <experiments>3</experiments>
</comment>
<comment type="interaction">
    <interactant intactId="EBI-396540">
        <id>Q12888</id>
    </interactant>
    <interactant intactId="EBI-12813389">
        <id>Q8TDS5</id>
        <label>OXER1</label>
    </interactant>
    <organismsDiffer>false</organismsDiffer>
    <experiments>3</experiments>
</comment>
<comment type="interaction">
    <interactant intactId="EBI-396540">
        <id>Q12888</id>
    </interactant>
    <interactant intactId="EBI-743225">
        <id>Q6ZW49</id>
        <label>PAXIP1</label>
    </interactant>
    <organismsDiffer>false</organismsDiffer>
    <experiments>4</experiments>
</comment>
<comment type="interaction">
    <interactant intactId="EBI-396540">
        <id>Q12888</id>
    </interactant>
    <interactant intactId="EBI-716404">
        <id>P16284</id>
        <label>PECAM1</label>
    </interactant>
    <organismsDiffer>false</organismsDiffer>
    <experiments>3</experiments>
</comment>
<comment type="interaction">
    <interactant intactId="EBI-396540">
        <id>Q12888</id>
    </interactant>
    <interactant intactId="EBI-748265">
        <id>P78337</id>
        <label>PITX1</label>
    </interactant>
    <organismsDiffer>false</organismsDiffer>
    <experiments>3</experiments>
</comment>
<comment type="interaction">
    <interactant intactId="EBI-396540">
        <id>Q12888</id>
    </interactant>
    <interactant intactId="EBI-2827556">
        <id>Q13393</id>
        <label>PLD1</label>
    </interactant>
    <organismsDiffer>false</organismsDiffer>
    <experiments>3</experiments>
</comment>
<comment type="interaction">
    <interactant intactId="EBI-396540">
        <id>Q12888</id>
    </interactant>
    <interactant intactId="EBI-476768">
        <id>P53350</id>
        <label>PLK1</label>
    </interactant>
    <organismsDiffer>false</organismsDiffer>
    <experiments>6</experiments>
</comment>
<comment type="interaction">
    <interactant intactId="EBI-396540">
        <id>Q12888</id>
    </interactant>
    <interactant intactId="EBI-50433196">
        <id>A0A6Q8PF08</id>
        <label>PMP22</label>
    </interactant>
    <organismsDiffer>false</organismsDiffer>
    <experiments>3</experiments>
</comment>
<comment type="interaction">
    <interactant intactId="EBI-396540">
        <id>Q12888</id>
    </interactant>
    <interactant intactId="EBI-12029004">
        <id>P78424</id>
        <label>POU6F2</label>
    </interactant>
    <organismsDiffer>false</organismsDiffer>
    <experiments>3</experiments>
</comment>
<comment type="interaction">
    <interactant intactId="EBI-396540">
        <id>Q12888</id>
    </interactant>
    <interactant intactId="EBI-5280197">
        <id>O75400-2</id>
        <label>PRPF40A</label>
    </interactant>
    <organismsDiffer>false</organismsDiffer>
    <experiments>3</experiments>
</comment>
<comment type="interaction">
    <interactant intactId="EBI-396540">
        <id>Q12888</id>
    </interactant>
    <interactant intactId="EBI-286642">
        <id>P62826</id>
        <label>RAN</label>
    </interactant>
    <organismsDiffer>false</organismsDiffer>
    <experiments>3</experiments>
</comment>
<comment type="interaction">
    <interactant intactId="EBI-396540">
        <id>Q12888</id>
    </interactant>
    <interactant intactId="EBI-20592761">
        <id>Q86V20-2</id>
        <label>SHLD2</label>
    </interactant>
    <organismsDiffer>false</organismsDiffer>
    <experiments>3</experiments>
</comment>
<comment type="interaction">
    <interactant intactId="EBI-396540">
        <id>Q12888</id>
    </interactant>
    <interactant intactId="EBI-5235340">
        <id>Q7Z699</id>
        <label>SPRED1</label>
    </interactant>
    <organismsDiffer>false</organismsDiffer>
    <experiments>3</experiments>
</comment>
<comment type="interaction">
    <interactant intactId="EBI-396540">
        <id>Q12888</id>
    </interactant>
    <interactant intactId="EBI-3939165">
        <id>O43711</id>
        <label>TLX3</label>
    </interactant>
    <organismsDiffer>false</organismsDiffer>
    <experiments>3</experiments>
</comment>
<comment type="interaction">
    <interactant intactId="EBI-396540">
        <id>Q12888</id>
    </interactant>
    <interactant intactId="EBI-366083">
        <id>P04637</id>
        <label>TP53</label>
    </interactant>
    <organismsDiffer>false</organismsDiffer>
    <experiments>8</experiments>
</comment>
<comment type="interaction">
    <interactant intactId="EBI-396540">
        <id>Q12888</id>
    </interactant>
    <interactant intactId="EBI-2514383">
        <id>Q5T6F2</id>
        <label>UBAP2</label>
    </interactant>
    <organismsDiffer>false</organismsDiffer>
    <experiments>3</experiments>
</comment>
<comment type="interaction">
    <interactant intactId="EBI-396540">
        <id>Q12888</id>
    </interactant>
    <interactant intactId="EBI-473850">
        <id>P61086</id>
        <label>UBE2K</label>
    </interactant>
    <organismsDiffer>false</organismsDiffer>
    <experiments>3</experiments>
</comment>
<comment type="interaction">
    <interactant intactId="EBI-396540">
        <id>Q12888</id>
    </interactant>
    <interactant intactId="EBI-2107455">
        <id>Q08AM6</id>
        <label>VAC14</label>
    </interactant>
    <organismsDiffer>false</organismsDiffer>
    <experiments>6</experiments>
</comment>
<comment type="interaction">
    <interactant intactId="EBI-396540">
        <id>Q12888</id>
    </interactant>
    <interactant intactId="EBI-12097582">
        <id>P23763-3</id>
        <label>VAMP1</label>
    </interactant>
    <organismsDiffer>false</organismsDiffer>
    <experiments>3</experiments>
</comment>
<comment type="interaction">
    <interactant intactId="EBI-396540">
        <id>Q12888</id>
    </interactant>
    <interactant intactId="EBI-353844">
        <id>P08670</id>
        <label>VIM</label>
    </interactant>
    <organismsDiffer>false</organismsDiffer>
    <experiments>3</experiments>
</comment>
<comment type="interaction">
    <interactant intactId="EBI-396540">
        <id>Q12888</id>
    </interactant>
    <interactant intactId="EBI-1769146">
        <id>Q99986</id>
        <label>VRK1</label>
    </interactant>
    <organismsDiffer>false</organismsDiffer>
    <experiments>8</experiments>
</comment>
<comment type="interaction">
    <interactant intactId="EBI-396540">
        <id>Q12888</id>
    </interactant>
    <interactant intactId="EBI-25896548">
        <id>P04275-2</id>
        <label>VWF</label>
    </interactant>
    <organismsDiffer>false</organismsDiffer>
    <experiments>3</experiments>
</comment>
<comment type="interaction">
    <interactant intactId="EBI-396540">
        <id>Q12888</id>
    </interactant>
    <interactant intactId="EBI-347522">
        <id>O43257</id>
        <label>ZNHIT1</label>
    </interactant>
    <organismsDiffer>false</organismsDiffer>
    <experiments>2</experiments>
</comment>
<comment type="interaction">
    <interactant intactId="EBI-396540">
        <id>Q12888</id>
    </interactant>
    <interactant intactId="EBI-1395317">
        <id>Q6NZQ4</id>
        <label>Paxip1</label>
    </interactant>
    <organismsDiffer>true</organismsDiffer>
    <experiments>5</experiments>
</comment>
<comment type="interaction">
    <interactant intactId="EBI-8022649">
        <id>Q12888-1</id>
    </interactant>
    <interactant intactId="EBI-302023">
        <id>P62805</id>
        <label>H4C9</label>
    </interactant>
    <organismsDiffer>false</organismsDiffer>
    <experiments>3</experiments>
</comment>
<comment type="interaction">
    <interactant intactId="EBI-8022649">
        <id>Q12888-1</id>
    </interactant>
    <interactant intactId="EBI-78670">
        <id>Q14686</id>
        <label>NCOA6</label>
    </interactant>
    <organismsDiffer>false</organismsDiffer>
    <experiments>3</experiments>
</comment>
<comment type="interaction">
    <interactant intactId="EBI-8022649">
        <id>Q12888-1</id>
    </interactant>
    <interactant intactId="EBI-80140">
        <id>P63165</id>
        <label>SUMO1</label>
    </interactant>
    <organismsDiffer>false</organismsDiffer>
    <experiments>2</experiments>
</comment>
<comment type="interaction">
    <interactant intactId="EBI-8022649">
        <id>Q12888-1</id>
    </interactant>
    <interactant intactId="EBI-366083">
        <id>P04637</id>
        <label>TP53</label>
    </interactant>
    <organismsDiffer>false</organismsDiffer>
    <experiments>17</experiments>
</comment>
<comment type="subcellular location">
    <subcellularLocation>
        <location evidence="5 12 14 15 16 19 23 32 38">Nucleus</location>
    </subcellularLocation>
    <subcellularLocation>
        <location evidence="10 12 16 25 28 30 32 35 37">Chromosome</location>
    </subcellularLocation>
    <subcellularLocation>
        <location evidence="1">Chromosome</location>
        <location evidence="1">Centromere</location>
        <location evidence="1">Kinetochore</location>
    </subcellularLocation>
    <text evidence="1 16 25 28 32 37">Localizes to the nucleus in absence of DNA damage (PubMed:28241136). Following DNA damage, recruited to sites of DNA damage, such as double stand breaks (DSBs): recognizes and binds histone H2A monoubiquitinated at 'Lys-15' (H2AK15Ub) and histone H4 dimethylated at 'Lys-20' (H4K20me2), two histone marks that are present at DSBs sites (PubMed:17190600, PubMed:23333306, PubMed:23760478, PubMed:24703952, PubMed:28241136, PubMed:31135337, PubMed:37696958). Associated with kinetochores during mitosis (By similarity).</text>
</comment>
<comment type="alternative products">
    <event type="alternative splicing"/>
    <isoform>
        <id>Q12888-1</id>
        <name>1</name>
        <sequence type="displayed"/>
    </isoform>
    <isoform>
        <id>Q12888-2</id>
        <name>2</name>
        <sequence type="described" ref="VSP_018390"/>
    </isoform>
    <isoform>
        <id>Q12888-3</id>
        <name>3</name>
        <sequence type="described" ref="VSP_018390 VSP_055062"/>
    </isoform>
</comment>
<comment type="domain">
    <text evidence="16 32">The Tudor-like region mediates binding to histone H4 dimethylated at 'Lys-20' (H4K20me2) (PubMed:17190600). Interaction with NUDT16L1/TIRR masks the Tudor-like domain and prevents recruitment to chromatin (PubMed:28241136).</text>
</comment>
<comment type="domain">
    <text evidence="28 30">The UDR (ubiquitin-dependent recruitment) motif specifically recognizes and binds histone H2A monoubiquitinated at 'Lys-15' (H2AK15ub) (PubMed:23760478, PubMed:24703952). Phosphorylation of the UDR blocks interaction with H2AK15ub (PubMed:24703952).</text>
</comment>
<comment type="PTM">
    <text evidence="14 15 33">Asymmetrically dimethylated on Arg residues by PRMT1. Methylation is required for DNA binding.</text>
</comment>
<comment type="PTM">
    <text evidence="4 5 17 19 23 25 27 30 32 35 36">Phosphorylated at basal level in the absence of DNA damage (PubMed:11042216, PubMed:11331310). Phosphorylated by ATM in response to DNA damage: phosphorylation at different sites promotes interaction with different set of proteins: phosphorylation at the N-terminus by ATM (residues from 6-178) promotes interaction with PAXIP1 and non-homologous end joining (NHEJ) of dysfunctional telomeres (PubMed:23727112). Phosphorylation by ATM at residues that are located more C-terminus (residues 300-650) leads to promote interaction with RIF1 (PubMed:23333306, PubMed:23727112, PubMed:28241136). Interaction with RIF1 leads to disrupt interaction with NUDT16L1/TIRR (PubMed:28241136). Phosphorylation at Thr-1609 and Ser-1618 in the UDR motif blocks interaction with H2AK15ub (PubMed:24703952). Dephosphorylated by PPP4C (PubMed:24703952). Hyperphosphorylation during mitosis correlates with its exclusion from chromatin and DNA lesions. Hyperphosphorylated in an ATR-dependent manner in response to DNA damage induced by UV irradiation (PubMed:17553757, PubMed:21144835). Dephosphorylated by PPP5C (PubMed:19176521). Phosphorylation at Ser-366 and Thr-670 promotes interaction with TOPBP1 (PubMed:31135337). Phosphorylated by VRK1 (PubMed:31527692).</text>
</comment>
<comment type="PTM">
    <text evidence="29">Monoubiquitinated at Lys-1685 by MSL2 is reponse to DNA damage, leading to its stabilization.</text>
</comment>
<comment type="disease">
    <text evidence="11">A chromosomal aberration involving TP53BP1 is found in a form of myeloproliferative disorder chronic with eosinophilia. Translocation t(5;15)(q33;q22) with PDGFRB creating a TP53BP1-PDGFRB fusion protein.</text>
</comment>
<comment type="sequence caution" evidence="43">
    <conflict type="erroneous initiation">
        <sequence resource="EMBL-CDS" id="BAE06107"/>
    </conflict>
    <text>Extended N-terminus.</text>
</comment>
<gene>
    <name evidence="46" type="primary">TP53BP1</name>
</gene>
<evidence type="ECO:0000250" key="1">
    <source>
        <dbReference type="UniProtKB" id="P70399"/>
    </source>
</evidence>
<evidence type="ECO:0000255" key="2">
    <source>
        <dbReference type="PROSITE-ProRule" id="PRU00033"/>
    </source>
</evidence>
<evidence type="ECO:0000256" key="3">
    <source>
        <dbReference type="SAM" id="MobiDB-lite"/>
    </source>
</evidence>
<evidence type="ECO:0000269" key="4">
    <source>
    </source>
</evidence>
<evidence type="ECO:0000269" key="5">
    <source>
    </source>
</evidence>
<evidence type="ECO:0000269" key="6">
    <source>
    </source>
</evidence>
<evidence type="ECO:0000269" key="7">
    <source>
    </source>
</evidence>
<evidence type="ECO:0000269" key="8">
    <source>
    </source>
</evidence>
<evidence type="ECO:0000269" key="9">
    <source>
    </source>
</evidence>
<evidence type="ECO:0000269" key="10">
    <source>
    </source>
</evidence>
<evidence type="ECO:0000269" key="11">
    <source>
    </source>
</evidence>
<evidence type="ECO:0000269" key="12">
    <source>
    </source>
</evidence>
<evidence type="ECO:0000269" key="13">
    <source>
    </source>
</evidence>
<evidence type="ECO:0000269" key="14">
    <source>
    </source>
</evidence>
<evidence type="ECO:0000269" key="15">
    <source>
    </source>
</evidence>
<evidence type="ECO:0000269" key="16">
    <source>
    </source>
</evidence>
<evidence type="ECO:0000269" key="17">
    <source>
    </source>
</evidence>
<evidence type="ECO:0000269" key="18">
    <source>
    </source>
</evidence>
<evidence type="ECO:0000269" key="19">
    <source>
    </source>
</evidence>
<evidence type="ECO:0000269" key="20">
    <source>
    </source>
</evidence>
<evidence type="ECO:0000269" key="21">
    <source>
    </source>
</evidence>
<evidence type="ECO:0000269" key="22">
    <source>
    </source>
</evidence>
<evidence type="ECO:0000269" key="23">
    <source>
    </source>
</evidence>
<evidence type="ECO:0000269" key="24">
    <source>
    </source>
</evidence>
<evidence type="ECO:0000269" key="25">
    <source>
    </source>
</evidence>
<evidence type="ECO:0000269" key="26">
    <source>
    </source>
</evidence>
<evidence type="ECO:0000269" key="27">
    <source>
    </source>
</evidence>
<evidence type="ECO:0000269" key="28">
    <source>
    </source>
</evidence>
<evidence type="ECO:0000269" key="29">
    <source>
    </source>
</evidence>
<evidence type="ECO:0000269" key="30">
    <source>
    </source>
</evidence>
<evidence type="ECO:0000269" key="31">
    <source>
    </source>
</evidence>
<evidence type="ECO:0000269" key="32">
    <source>
    </source>
</evidence>
<evidence type="ECO:0000269" key="33">
    <source>
    </source>
</evidence>
<evidence type="ECO:0000269" key="34">
    <source>
    </source>
</evidence>
<evidence type="ECO:0000269" key="35">
    <source>
    </source>
</evidence>
<evidence type="ECO:0000269" key="36">
    <source>
    </source>
</evidence>
<evidence type="ECO:0000269" key="37">
    <source>
    </source>
</evidence>
<evidence type="ECO:0000269" key="38">
    <source>
    </source>
</evidence>
<evidence type="ECO:0000269" key="39">
    <source ref="4"/>
</evidence>
<evidence type="ECO:0000303" key="40">
    <source>
    </source>
</evidence>
<evidence type="ECO:0000303" key="41">
    <source>
    </source>
</evidence>
<evidence type="ECO:0000303" key="42">
    <source ref="2"/>
</evidence>
<evidence type="ECO:0000305" key="43"/>
<evidence type="ECO:0000305" key="44">
    <source>
    </source>
</evidence>
<evidence type="ECO:0000305" key="45">
    <source>
    </source>
</evidence>
<evidence type="ECO:0000312" key="46">
    <source>
        <dbReference type="HGNC" id="HGNC:11999"/>
    </source>
</evidence>
<evidence type="ECO:0007744" key="47">
    <source>
        <dbReference type="PDB" id="6RML"/>
    </source>
</evidence>
<evidence type="ECO:0007744" key="48">
    <source>
        <dbReference type="PDB" id="6RMM"/>
    </source>
</evidence>
<evidence type="ECO:0007744" key="49">
    <source>
    </source>
</evidence>
<evidence type="ECO:0007744" key="50">
    <source>
    </source>
</evidence>
<evidence type="ECO:0007744" key="51">
    <source>
    </source>
</evidence>
<evidence type="ECO:0007744" key="52">
    <source>
    </source>
</evidence>
<evidence type="ECO:0007744" key="53">
    <source>
    </source>
</evidence>
<evidence type="ECO:0007744" key="54">
    <source>
    </source>
</evidence>
<evidence type="ECO:0007744" key="55">
    <source>
    </source>
</evidence>
<evidence type="ECO:0007744" key="56">
    <source>
    </source>
</evidence>
<evidence type="ECO:0007744" key="57">
    <source>
    </source>
</evidence>
<evidence type="ECO:0007744" key="58">
    <source>
    </source>
</evidence>
<evidence type="ECO:0007744" key="59">
    <source>
    </source>
</evidence>
<evidence type="ECO:0007744" key="60">
    <source>
    </source>
</evidence>
<evidence type="ECO:0007744" key="61">
    <source>
    </source>
</evidence>
<evidence type="ECO:0007744" key="62">
    <source>
    </source>
</evidence>
<evidence type="ECO:0007829" key="63">
    <source>
        <dbReference type="PDB" id="1GZH"/>
    </source>
</evidence>
<evidence type="ECO:0007829" key="64">
    <source>
        <dbReference type="PDB" id="1KZY"/>
    </source>
</evidence>
<evidence type="ECO:0007829" key="65">
    <source>
        <dbReference type="PDB" id="2G3R"/>
    </source>
</evidence>
<evidence type="ECO:0007829" key="66">
    <source>
        <dbReference type="PDB" id="2LVM"/>
    </source>
</evidence>
<evidence type="ECO:0007829" key="67">
    <source>
        <dbReference type="PDB" id="6IUA"/>
    </source>
</evidence>
<evidence type="ECO:0007829" key="68">
    <source>
        <dbReference type="PDB" id="7YQK"/>
    </source>
</evidence>
<evidence type="ECO:0007829" key="69">
    <source>
        <dbReference type="PDB" id="8F0W"/>
    </source>
</evidence>
<evidence type="ECO:0007829" key="70">
    <source>
        <dbReference type="PDB" id="8SVH"/>
    </source>
</evidence>
<evidence type="ECO:0007829" key="71">
    <source>
        <dbReference type="PDB" id="8SVI"/>
    </source>
</evidence>
<evidence type="ECO:0007829" key="72">
    <source>
        <dbReference type="PDB" id="8SWJ"/>
    </source>
</evidence>
<dbReference type="EMBL" id="AF078776">
    <property type="protein sequence ID" value="AAC62018.1"/>
    <property type="molecule type" value="mRNA"/>
</dbReference>
<dbReference type="EMBL" id="AB210025">
    <property type="protein sequence ID" value="BAE06107.1"/>
    <property type="status" value="ALT_INIT"/>
    <property type="molecule type" value="mRNA"/>
</dbReference>
<dbReference type="EMBL" id="BX537418">
    <property type="protein sequence ID" value="CAD97660.1"/>
    <property type="molecule type" value="mRNA"/>
</dbReference>
<dbReference type="EMBL" id="AY904026">
    <property type="protein sequence ID" value="AAW69392.1"/>
    <property type="molecule type" value="Genomic_DNA"/>
</dbReference>
<dbReference type="EMBL" id="AC018924">
    <property type="status" value="NOT_ANNOTATED_CDS"/>
    <property type="molecule type" value="Genomic_DNA"/>
</dbReference>
<dbReference type="EMBL" id="BC112161">
    <property type="protein sequence ID" value="AAI12162.1"/>
    <property type="molecule type" value="mRNA"/>
</dbReference>
<dbReference type="EMBL" id="U09477">
    <property type="protein sequence ID" value="AAA21596.1"/>
    <property type="molecule type" value="mRNA"/>
</dbReference>
<dbReference type="CCDS" id="CCDS10096.1">
    <molecule id="Q12888-1"/>
</dbReference>
<dbReference type="CCDS" id="CCDS45250.1">
    <molecule id="Q12888-2"/>
</dbReference>
<dbReference type="CCDS" id="CCDS45251.1">
    <molecule id="Q12888-3"/>
</dbReference>
<dbReference type="PIR" id="I38604">
    <property type="entry name" value="I38604"/>
</dbReference>
<dbReference type="RefSeq" id="NP_001135451.1">
    <molecule id="Q12888-3"/>
    <property type="nucleotide sequence ID" value="NM_001141979.3"/>
</dbReference>
<dbReference type="RefSeq" id="NP_001135452.1">
    <molecule id="Q12888-2"/>
    <property type="nucleotide sequence ID" value="NM_001141980.3"/>
</dbReference>
<dbReference type="RefSeq" id="NP_005648.1">
    <molecule id="Q12888-1"/>
    <property type="nucleotide sequence ID" value="NM_005657.4"/>
</dbReference>
<dbReference type="RefSeq" id="XP_047288950.1">
    <molecule id="Q12888-2"/>
    <property type="nucleotide sequence ID" value="XM_047432994.1"/>
</dbReference>
<dbReference type="RefSeq" id="XP_047288951.1">
    <molecule id="Q12888-2"/>
    <property type="nucleotide sequence ID" value="XM_047432995.1"/>
</dbReference>
<dbReference type="RefSeq" id="XP_054234710.1">
    <molecule id="Q12888-2"/>
    <property type="nucleotide sequence ID" value="XM_054378735.1"/>
</dbReference>
<dbReference type="RefSeq" id="XP_054234711.1">
    <molecule id="Q12888-2"/>
    <property type="nucleotide sequence ID" value="XM_054378736.1"/>
</dbReference>
<dbReference type="PDB" id="1GZH">
    <property type="method" value="X-ray"/>
    <property type="resolution" value="2.60 A"/>
    <property type="chains" value="B/D=1724-1972"/>
</dbReference>
<dbReference type="PDB" id="1KZY">
    <property type="method" value="X-ray"/>
    <property type="resolution" value="2.50 A"/>
    <property type="chains" value="C/D=1714-1972"/>
</dbReference>
<dbReference type="PDB" id="1XNI">
    <property type="method" value="X-ray"/>
    <property type="resolution" value="2.80 A"/>
    <property type="chains" value="A/B/C/D/E/F/G/H/I/J=1485-1602"/>
</dbReference>
<dbReference type="PDB" id="2G3R">
    <property type="method" value="X-ray"/>
    <property type="resolution" value="1.25 A"/>
    <property type="chains" value="A=1484-1603"/>
</dbReference>
<dbReference type="PDB" id="2IG0">
    <property type="method" value="X-ray"/>
    <property type="resolution" value="1.70 A"/>
    <property type="chains" value="A=1484-1603"/>
</dbReference>
<dbReference type="PDB" id="2LVM">
    <property type="method" value="NMR"/>
    <property type="chains" value="A=1484-1603"/>
</dbReference>
<dbReference type="PDB" id="2MWO">
    <property type="method" value="NMR"/>
    <property type="chains" value="A=1484-1603"/>
</dbReference>
<dbReference type="PDB" id="2MWP">
    <property type="method" value="NMR"/>
    <property type="chains" value="A=1484-1603"/>
</dbReference>
<dbReference type="PDB" id="3LGF">
    <property type="method" value="X-ray"/>
    <property type="resolution" value="1.50 A"/>
    <property type="chains" value="A=1484-1603"/>
</dbReference>
<dbReference type="PDB" id="3LGL">
    <property type="method" value="X-ray"/>
    <property type="resolution" value="1.60 A"/>
    <property type="chains" value="A=1484-1603"/>
</dbReference>
<dbReference type="PDB" id="3LH0">
    <property type="method" value="X-ray"/>
    <property type="resolution" value="1.90 A"/>
    <property type="chains" value="A=1484-1603"/>
</dbReference>
<dbReference type="PDB" id="4CRI">
    <property type="method" value="X-ray"/>
    <property type="resolution" value="2.35 A"/>
    <property type="chains" value="A/B=1459-1634"/>
</dbReference>
<dbReference type="PDB" id="4RG2">
    <property type="method" value="X-ray"/>
    <property type="resolution" value="1.50 A"/>
    <property type="chains" value="A/B=1483-1606"/>
</dbReference>
<dbReference type="PDB" id="4X34">
    <property type="method" value="X-ray"/>
    <property type="resolution" value="1.80 A"/>
    <property type="chains" value="A/B=1484-1603"/>
</dbReference>
<dbReference type="PDB" id="5ECG">
    <property type="method" value="X-ray"/>
    <property type="resolution" value="3.00 A"/>
    <property type="chains" value="C/D=1713-1972"/>
</dbReference>
<dbReference type="PDB" id="5J26">
    <property type="method" value="X-ray"/>
    <property type="resolution" value="2.50 A"/>
    <property type="chains" value="A=1487-1603"/>
</dbReference>
<dbReference type="PDB" id="5KGF">
    <property type="method" value="EM"/>
    <property type="resolution" value="4.54 A"/>
    <property type="chains" value="K/L=1611-1631"/>
</dbReference>
<dbReference type="PDB" id="5Z78">
    <property type="method" value="X-ray"/>
    <property type="resolution" value="1.76 A"/>
    <property type="chains" value="C=1484-1603"/>
</dbReference>
<dbReference type="PDB" id="5ZCJ">
    <property type="method" value="X-ray"/>
    <property type="resolution" value="2.00 A"/>
    <property type="chains" value="C=1459-1634"/>
</dbReference>
<dbReference type="PDB" id="6CO1">
    <property type="method" value="X-ray"/>
    <property type="resolution" value="2.18 A"/>
    <property type="chains" value="E/F=1484-1603"/>
</dbReference>
<dbReference type="PDB" id="6CO2">
    <property type="method" value="X-ray"/>
    <property type="resolution" value="2.49 A"/>
    <property type="chains" value="C/D=1484-1603"/>
</dbReference>
<dbReference type="PDB" id="6IU7">
    <property type="method" value="X-ray"/>
    <property type="resolution" value="1.90 A"/>
    <property type="chains" value="B=1665-1686"/>
</dbReference>
<dbReference type="PDB" id="6IUA">
    <property type="method" value="X-ray"/>
    <property type="resolution" value="1.70 A"/>
    <property type="chains" value="B=1665-1686"/>
</dbReference>
<dbReference type="PDB" id="6MXX">
    <property type="method" value="X-ray"/>
    <property type="resolution" value="2.30 A"/>
    <property type="chains" value="A/B/C/D/E/F/G/H/I/J=1484-1603"/>
</dbReference>
<dbReference type="PDB" id="6MXY">
    <property type="method" value="X-ray"/>
    <property type="resolution" value="1.62 A"/>
    <property type="chains" value="A/B=1484-1603"/>
</dbReference>
<dbReference type="PDB" id="6MXZ">
    <property type="method" value="X-ray"/>
    <property type="resolution" value="2.50 A"/>
    <property type="chains" value="A/B/C/D/E/F/G/H/I/J=1484-1603"/>
</dbReference>
<dbReference type="PDB" id="6MY0">
    <property type="method" value="X-ray"/>
    <property type="resolution" value="2.20 A"/>
    <property type="chains" value="A/B=1484-1603"/>
</dbReference>
<dbReference type="PDB" id="6RML">
    <property type="method" value="X-ray"/>
    <property type="resolution" value="2.81 A"/>
    <property type="chains" value="C=663-677"/>
</dbReference>
<dbReference type="PDB" id="6RMM">
    <property type="method" value="X-ray"/>
    <property type="resolution" value="3.53 A"/>
    <property type="chains" value="P/R=359-373"/>
</dbReference>
<dbReference type="PDB" id="6UPT">
    <property type="method" value="X-ray"/>
    <property type="resolution" value="1.96 A"/>
    <property type="chains" value="A/B=1483-1606"/>
</dbReference>
<dbReference type="PDB" id="6VA5">
    <property type="method" value="X-ray"/>
    <property type="resolution" value="1.28 A"/>
    <property type="chains" value="A=1483-1606"/>
</dbReference>
<dbReference type="PDB" id="6VIP">
    <property type="method" value="X-ray"/>
    <property type="resolution" value="1.36 A"/>
    <property type="chains" value="A/B=1483-1606"/>
</dbReference>
<dbReference type="PDB" id="7LIN">
    <property type="method" value="X-ray"/>
    <property type="resolution" value="1.44 A"/>
    <property type="chains" value="B=1636-1650"/>
</dbReference>
<dbReference type="PDB" id="7LIO">
    <property type="method" value="X-ray"/>
    <property type="resolution" value="3.01 A"/>
    <property type="chains" value="C/D=1636-1650"/>
</dbReference>
<dbReference type="PDB" id="7YQK">
    <property type="method" value="EM"/>
    <property type="resolution" value="3.38 A"/>
    <property type="chains" value="K=1613-1630, N=1485-1602"/>
</dbReference>
<dbReference type="PDB" id="8EOM">
    <property type="method" value="X-ray"/>
    <property type="resolution" value="1.70 A"/>
    <property type="chains" value="A/B=1483-1606"/>
</dbReference>
<dbReference type="PDB" id="8F0W">
    <property type="method" value="X-ray"/>
    <property type="resolution" value="1.52 A"/>
    <property type="chains" value="A/B=1483-1606"/>
</dbReference>
<dbReference type="PDB" id="8HKW">
    <property type="method" value="X-ray"/>
    <property type="resolution" value="1.90 A"/>
    <property type="chains" value="C/D=1665-1686"/>
</dbReference>
<dbReference type="PDB" id="8SVG">
    <property type="method" value="X-ray"/>
    <property type="resolution" value="1.21 A"/>
    <property type="chains" value="A=1484-1603"/>
</dbReference>
<dbReference type="PDB" id="8SVH">
    <property type="method" value="X-ray"/>
    <property type="resolution" value="1.16 A"/>
    <property type="chains" value="A=1484-1603"/>
</dbReference>
<dbReference type="PDB" id="8SVI">
    <property type="method" value="X-ray"/>
    <property type="resolution" value="1.15 A"/>
    <property type="chains" value="A=1484-1603"/>
</dbReference>
<dbReference type="PDB" id="8SVJ">
    <property type="method" value="X-ray"/>
    <property type="resolution" value="1.50 A"/>
    <property type="chains" value="A=1484-1603"/>
</dbReference>
<dbReference type="PDB" id="8SWJ">
    <property type="method" value="X-ray"/>
    <property type="resolution" value="1.60 A"/>
    <property type="chains" value="A/B/C/D=1483-1606"/>
</dbReference>
<dbReference type="PDB" id="8T2D">
    <property type="method" value="X-ray"/>
    <property type="resolution" value="1.75 A"/>
    <property type="chains" value="A=1484-1603"/>
</dbReference>
<dbReference type="PDB" id="8U4U">
    <property type="method" value="X-ray"/>
    <property type="resolution" value="3.79 A"/>
    <property type="chains" value="A/B/C/D/E/F/G/H/I/J=1484-1603"/>
</dbReference>
<dbReference type="PDBsum" id="1GZH"/>
<dbReference type="PDBsum" id="1KZY"/>
<dbReference type="PDBsum" id="1XNI"/>
<dbReference type="PDBsum" id="2G3R"/>
<dbReference type="PDBsum" id="2IG0"/>
<dbReference type="PDBsum" id="2LVM"/>
<dbReference type="PDBsum" id="2MWO"/>
<dbReference type="PDBsum" id="2MWP"/>
<dbReference type="PDBsum" id="3LGF"/>
<dbReference type="PDBsum" id="3LGL"/>
<dbReference type="PDBsum" id="3LH0"/>
<dbReference type="PDBsum" id="4CRI"/>
<dbReference type="PDBsum" id="4RG2"/>
<dbReference type="PDBsum" id="4X34"/>
<dbReference type="PDBsum" id="5ECG"/>
<dbReference type="PDBsum" id="5J26"/>
<dbReference type="PDBsum" id="5KGF"/>
<dbReference type="PDBsum" id="5Z78"/>
<dbReference type="PDBsum" id="5ZCJ"/>
<dbReference type="PDBsum" id="6CO1"/>
<dbReference type="PDBsum" id="6CO2"/>
<dbReference type="PDBsum" id="6IU7"/>
<dbReference type="PDBsum" id="6IUA"/>
<dbReference type="PDBsum" id="6MXX"/>
<dbReference type="PDBsum" id="6MXY"/>
<dbReference type="PDBsum" id="6MXZ"/>
<dbReference type="PDBsum" id="6MY0"/>
<dbReference type="PDBsum" id="6RML"/>
<dbReference type="PDBsum" id="6RMM"/>
<dbReference type="PDBsum" id="6UPT"/>
<dbReference type="PDBsum" id="6VA5"/>
<dbReference type="PDBsum" id="6VIP"/>
<dbReference type="PDBsum" id="7LIN"/>
<dbReference type="PDBsum" id="7LIO"/>
<dbReference type="PDBsum" id="7YQK"/>
<dbReference type="PDBsum" id="8EOM"/>
<dbReference type="PDBsum" id="8F0W"/>
<dbReference type="PDBsum" id="8HKW"/>
<dbReference type="PDBsum" id="8SVG"/>
<dbReference type="PDBsum" id="8SVH"/>
<dbReference type="PDBsum" id="8SVI"/>
<dbReference type="PDBsum" id="8SVJ"/>
<dbReference type="PDBsum" id="8SWJ"/>
<dbReference type="PDBsum" id="8T2D"/>
<dbReference type="PDBsum" id="8U4U"/>
<dbReference type="BMRB" id="Q12888"/>
<dbReference type="SMR" id="Q12888"/>
<dbReference type="BioGRID" id="113011">
    <property type="interactions" value="530"/>
</dbReference>
<dbReference type="CORUM" id="Q12888"/>
<dbReference type="DIP" id="DIP-5978N"/>
<dbReference type="FunCoup" id="Q12888">
    <property type="interactions" value="3752"/>
</dbReference>
<dbReference type="IntAct" id="Q12888">
    <property type="interactions" value="390"/>
</dbReference>
<dbReference type="MINT" id="Q12888"/>
<dbReference type="STRING" id="9606.ENSP00000371475"/>
<dbReference type="BindingDB" id="Q12888"/>
<dbReference type="ChEMBL" id="CHEMBL2424509"/>
<dbReference type="GlyCosmos" id="Q12888">
    <property type="glycosylation" value="3 sites, 1 glycan"/>
</dbReference>
<dbReference type="GlyGen" id="Q12888">
    <property type="glycosylation" value="10 sites, 1 N-linked glycan (1 site), 1 O-linked glycan (7 sites)"/>
</dbReference>
<dbReference type="iPTMnet" id="Q12888"/>
<dbReference type="MetOSite" id="Q12888"/>
<dbReference type="PhosphoSitePlus" id="Q12888"/>
<dbReference type="SwissPalm" id="Q12888"/>
<dbReference type="BioMuta" id="TP53BP1"/>
<dbReference type="DMDM" id="8928568"/>
<dbReference type="CPTAC" id="CPTAC-1014"/>
<dbReference type="CPTAC" id="CPTAC-1015"/>
<dbReference type="CPTAC" id="CPTAC-1334"/>
<dbReference type="CPTAC" id="CPTAC-2608"/>
<dbReference type="CPTAC" id="CPTAC-2609"/>
<dbReference type="CPTAC" id="CPTAC-5914"/>
<dbReference type="CPTAC" id="CPTAC-5915"/>
<dbReference type="CPTAC" id="CPTAC-5916"/>
<dbReference type="CPTAC" id="CPTAC-5917"/>
<dbReference type="jPOST" id="Q12888"/>
<dbReference type="MassIVE" id="Q12888"/>
<dbReference type="PaxDb" id="9606-ENSP00000371475"/>
<dbReference type="PeptideAtlas" id="Q12888"/>
<dbReference type="ProteomicsDB" id="29194"/>
<dbReference type="ProteomicsDB" id="59003">
    <molecule id="Q12888-1"/>
</dbReference>
<dbReference type="ProteomicsDB" id="59004">
    <molecule id="Q12888-2"/>
</dbReference>
<dbReference type="Pumba" id="Q12888"/>
<dbReference type="ABCD" id="Q12888">
    <property type="antibodies" value="6 sequenced antibodies"/>
</dbReference>
<dbReference type="Antibodypedia" id="1749">
    <property type="antibodies" value="1006 antibodies from 41 providers"/>
</dbReference>
<dbReference type="CPTC" id="Q12888">
    <property type="antibodies" value="1 antibody"/>
</dbReference>
<dbReference type="DNASU" id="7158"/>
<dbReference type="Ensembl" id="ENST00000263801.7">
    <molecule id="Q12888-1"/>
    <property type="protein sequence ID" value="ENSP00000263801.3"/>
    <property type="gene ID" value="ENSG00000067369.14"/>
</dbReference>
<dbReference type="Ensembl" id="ENST00000382044.9">
    <molecule id="Q12888-2"/>
    <property type="protein sequence ID" value="ENSP00000371475.5"/>
    <property type="gene ID" value="ENSG00000067369.14"/>
</dbReference>
<dbReference type="Ensembl" id="ENST00000450115.6">
    <molecule id="Q12888-3"/>
    <property type="protein sequence ID" value="ENSP00000393497.2"/>
    <property type="gene ID" value="ENSG00000067369.14"/>
</dbReference>
<dbReference type="GeneID" id="7158"/>
<dbReference type="KEGG" id="hsa:7158"/>
<dbReference type="MANE-Select" id="ENST00000382044.9">
    <molecule id="Q12888-2"/>
    <property type="protein sequence ID" value="ENSP00000371475.5"/>
    <property type="RefSeq nucleotide sequence ID" value="NM_001141980.3"/>
    <property type="RefSeq protein sequence ID" value="NP_001135452.1"/>
</dbReference>
<dbReference type="UCSC" id="uc001zrq.5">
    <molecule id="Q12888-1"/>
    <property type="organism name" value="human"/>
</dbReference>
<dbReference type="AGR" id="HGNC:11999"/>
<dbReference type="CTD" id="7158"/>
<dbReference type="DisGeNET" id="7158"/>
<dbReference type="GeneCards" id="TP53BP1"/>
<dbReference type="HGNC" id="HGNC:11999">
    <property type="gene designation" value="TP53BP1"/>
</dbReference>
<dbReference type="HPA" id="ENSG00000067369">
    <property type="expression patterns" value="Low tissue specificity"/>
</dbReference>
<dbReference type="MalaCards" id="TP53BP1"/>
<dbReference type="MIM" id="605230">
    <property type="type" value="gene"/>
</dbReference>
<dbReference type="neXtProt" id="NX_Q12888"/>
<dbReference type="OpenTargets" id="ENSG00000067369"/>
<dbReference type="PharmGKB" id="PA36680"/>
<dbReference type="VEuPathDB" id="HostDB:ENSG00000067369"/>
<dbReference type="eggNOG" id="KOG3548">
    <property type="taxonomic scope" value="Eukaryota"/>
</dbReference>
<dbReference type="GeneTree" id="ENSGT00390000011891"/>
<dbReference type="HOGENOM" id="CLU_002167_0_0_1"/>
<dbReference type="InParanoid" id="Q12888"/>
<dbReference type="OMA" id="EPCVENR"/>
<dbReference type="OrthoDB" id="129353at2759"/>
<dbReference type="PAN-GO" id="Q12888">
    <property type="GO annotations" value="4 GO annotations based on evolutionary models"/>
</dbReference>
<dbReference type="PhylomeDB" id="Q12888"/>
<dbReference type="TreeFam" id="TF350227"/>
<dbReference type="PathwayCommons" id="Q12888"/>
<dbReference type="Reactome" id="R-HSA-3232118">
    <property type="pathway name" value="SUMOylation of transcription factors"/>
</dbReference>
<dbReference type="Reactome" id="R-HSA-5693565">
    <property type="pathway name" value="Recruitment and ATM-mediated phosphorylation of repair and signaling proteins at DNA double strand breaks"/>
</dbReference>
<dbReference type="Reactome" id="R-HSA-5693571">
    <property type="pathway name" value="Nonhomologous End-Joining (NHEJ)"/>
</dbReference>
<dbReference type="Reactome" id="R-HSA-5693607">
    <property type="pathway name" value="Processing of DNA double-strand break ends"/>
</dbReference>
<dbReference type="Reactome" id="R-HSA-69473">
    <property type="pathway name" value="G2/M DNA damage checkpoint"/>
</dbReference>
<dbReference type="SignaLink" id="Q12888"/>
<dbReference type="SIGNOR" id="Q12888"/>
<dbReference type="BioGRID-ORCS" id="7158">
    <property type="hits" value="38 hits in 1177 CRISPR screens"/>
</dbReference>
<dbReference type="CD-CODE" id="15E34471">
    <property type="entry name" value="Synthetic Condensate 000334"/>
</dbReference>
<dbReference type="CD-CODE" id="462A97B5">
    <property type="entry name" value="Leucocyte nuclear body"/>
</dbReference>
<dbReference type="CD-CODE" id="A0DCDA94">
    <property type="entry name" value="DNA damage foci"/>
</dbReference>
<dbReference type="ChiTaRS" id="TP53BP1">
    <property type="organism name" value="human"/>
</dbReference>
<dbReference type="EvolutionaryTrace" id="Q12888"/>
<dbReference type="GeneWiki" id="TP53BP1"/>
<dbReference type="GenomeRNAi" id="7158"/>
<dbReference type="Pharos" id="Q12888">
    <property type="development level" value="Tbio"/>
</dbReference>
<dbReference type="PRO" id="PR:Q12888"/>
<dbReference type="Proteomes" id="UP000005640">
    <property type="component" value="Chromosome 15"/>
</dbReference>
<dbReference type="RNAct" id="Q12888">
    <property type="molecule type" value="protein"/>
</dbReference>
<dbReference type="Bgee" id="ENSG00000067369">
    <property type="expression patterns" value="Expressed in pituitary gland and 200 other cell types or tissues"/>
</dbReference>
<dbReference type="ExpressionAtlas" id="Q12888">
    <property type="expression patterns" value="baseline and differential"/>
</dbReference>
<dbReference type="GO" id="GO:0000781">
    <property type="term" value="C:chromosome, telomeric region"/>
    <property type="evidence" value="ECO:0007669"/>
    <property type="project" value="Ensembl"/>
</dbReference>
<dbReference type="GO" id="GO:0005737">
    <property type="term" value="C:cytoplasm"/>
    <property type="evidence" value="ECO:0000314"/>
    <property type="project" value="ProtInc"/>
</dbReference>
<dbReference type="GO" id="GO:1990391">
    <property type="term" value="C:DNA repair complex"/>
    <property type="evidence" value="ECO:0007669"/>
    <property type="project" value="Ensembl"/>
</dbReference>
<dbReference type="GO" id="GO:0000776">
    <property type="term" value="C:kinetochore"/>
    <property type="evidence" value="ECO:0007669"/>
    <property type="project" value="UniProtKB-KW"/>
</dbReference>
<dbReference type="GO" id="GO:0016604">
    <property type="term" value="C:nuclear body"/>
    <property type="evidence" value="ECO:0000314"/>
    <property type="project" value="HPA"/>
</dbReference>
<dbReference type="GO" id="GO:0005654">
    <property type="term" value="C:nucleoplasm"/>
    <property type="evidence" value="ECO:0000314"/>
    <property type="project" value="HPA"/>
</dbReference>
<dbReference type="GO" id="GO:0005634">
    <property type="term" value="C:nucleus"/>
    <property type="evidence" value="ECO:0000314"/>
    <property type="project" value="UniProtKB"/>
</dbReference>
<dbReference type="GO" id="GO:0005657">
    <property type="term" value="C:replication fork"/>
    <property type="evidence" value="ECO:0007669"/>
    <property type="project" value="Ensembl"/>
</dbReference>
<dbReference type="GO" id="GO:0035861">
    <property type="term" value="C:site of double-strand break"/>
    <property type="evidence" value="ECO:0000314"/>
    <property type="project" value="UniProtKB"/>
</dbReference>
<dbReference type="GO" id="GO:0003684">
    <property type="term" value="F:damaged DNA binding"/>
    <property type="evidence" value="ECO:0007669"/>
    <property type="project" value="Ensembl"/>
</dbReference>
<dbReference type="GO" id="GO:0042393">
    <property type="term" value="F:histone binding"/>
    <property type="evidence" value="ECO:0000318"/>
    <property type="project" value="GO_Central"/>
</dbReference>
<dbReference type="GO" id="GO:0140005">
    <property type="term" value="F:histone H4K20me2 reader activity"/>
    <property type="evidence" value="ECO:0000314"/>
    <property type="project" value="UniProtKB"/>
</dbReference>
<dbReference type="GO" id="GO:0140566">
    <property type="term" value="F:histone reader activity"/>
    <property type="evidence" value="ECO:0000314"/>
    <property type="project" value="UniProt"/>
</dbReference>
<dbReference type="GO" id="GO:0035064">
    <property type="term" value="F:methylated histone binding"/>
    <property type="evidence" value="ECO:0000314"/>
    <property type="project" value="UniProt"/>
</dbReference>
<dbReference type="GO" id="GO:0002039">
    <property type="term" value="F:p53 binding"/>
    <property type="evidence" value="ECO:0000353"/>
    <property type="project" value="AgBase"/>
</dbReference>
<dbReference type="GO" id="GO:0061629">
    <property type="term" value="F:RNA polymerase II-specific DNA-binding transcription factor binding"/>
    <property type="evidence" value="ECO:0000353"/>
    <property type="project" value="BHF-UCL"/>
</dbReference>
<dbReference type="GO" id="GO:0042162">
    <property type="term" value="F:telomeric DNA binding"/>
    <property type="evidence" value="ECO:0007669"/>
    <property type="project" value="Ensembl"/>
</dbReference>
<dbReference type="GO" id="GO:0003713">
    <property type="term" value="F:transcription coactivator activity"/>
    <property type="evidence" value="ECO:0000315"/>
    <property type="project" value="BHF-UCL"/>
</dbReference>
<dbReference type="GO" id="GO:0003712">
    <property type="term" value="F:transcription coregulator activity"/>
    <property type="evidence" value="ECO:0000315"/>
    <property type="project" value="UniProt"/>
</dbReference>
<dbReference type="GO" id="GO:0061649">
    <property type="term" value="F:ubiquitin-modified histone reader activity"/>
    <property type="evidence" value="ECO:0000314"/>
    <property type="project" value="UniProtKB"/>
</dbReference>
<dbReference type="GO" id="GO:0071481">
    <property type="term" value="P:cellular response to X-ray"/>
    <property type="evidence" value="ECO:0007669"/>
    <property type="project" value="Ensembl"/>
</dbReference>
<dbReference type="GO" id="GO:0000077">
    <property type="term" value="P:DNA damage checkpoint signaling"/>
    <property type="evidence" value="ECO:0000318"/>
    <property type="project" value="GO_Central"/>
</dbReference>
<dbReference type="GO" id="GO:0006974">
    <property type="term" value="P:DNA damage response"/>
    <property type="evidence" value="ECO:0000314"/>
    <property type="project" value="UniProtKB"/>
</dbReference>
<dbReference type="GO" id="GO:0097680">
    <property type="term" value="P:double-strand break repair via classical nonhomologous end joining"/>
    <property type="evidence" value="ECO:0000314"/>
    <property type="project" value="UniProt"/>
</dbReference>
<dbReference type="GO" id="GO:0006303">
    <property type="term" value="P:double-strand break repair via nonhomologous end joining"/>
    <property type="evidence" value="ECO:0000314"/>
    <property type="project" value="UniProtKB"/>
</dbReference>
<dbReference type="GO" id="GO:2000042">
    <property type="term" value="P:negative regulation of double-strand break repair via homologous recombination"/>
    <property type="evidence" value="ECO:0000314"/>
    <property type="project" value="UniProtKB"/>
</dbReference>
<dbReference type="GO" id="GO:0045893">
    <property type="term" value="P:positive regulation of DNA-templated transcription"/>
    <property type="evidence" value="ECO:0000303"/>
    <property type="project" value="UniProtKB"/>
</dbReference>
<dbReference type="GO" id="GO:1902255">
    <property type="term" value="P:positive regulation of intrinsic apoptotic signaling pathway by p53 class mediator"/>
    <property type="evidence" value="ECO:0000315"/>
    <property type="project" value="BHF-UCL"/>
</dbReference>
<dbReference type="GO" id="GO:0045830">
    <property type="term" value="P:positive regulation of isotype switching"/>
    <property type="evidence" value="ECO:0000314"/>
    <property type="project" value="UniProtKB"/>
</dbReference>
<dbReference type="GO" id="GO:0045944">
    <property type="term" value="P:positive regulation of transcription by RNA polymerase II"/>
    <property type="evidence" value="ECO:0000315"/>
    <property type="project" value="BHF-UCL"/>
</dbReference>
<dbReference type="GO" id="GO:0051260">
    <property type="term" value="P:protein homooligomerization"/>
    <property type="evidence" value="ECO:0000314"/>
    <property type="project" value="UniProtKB"/>
</dbReference>
<dbReference type="GO" id="GO:1990166">
    <property type="term" value="P:protein localization to site of double-strand break"/>
    <property type="evidence" value="ECO:0000314"/>
    <property type="project" value="UniProtKB"/>
</dbReference>
<dbReference type="CDD" id="cd17745">
    <property type="entry name" value="BRCT_p53bp1_rpt1"/>
    <property type="match status" value="1"/>
</dbReference>
<dbReference type="CDD" id="cd17724">
    <property type="entry name" value="BRCT_p53bp1_rpt2"/>
    <property type="match status" value="1"/>
</dbReference>
<dbReference type="CDD" id="cd20383">
    <property type="entry name" value="Tudor_53BP1"/>
    <property type="match status" value="1"/>
</dbReference>
<dbReference type="DisProt" id="DP02954"/>
<dbReference type="FunFam" id="2.30.30.140:FF:000021">
    <property type="entry name" value="Tumor suppressor p53-binding protein 1"/>
    <property type="match status" value="1"/>
</dbReference>
<dbReference type="FunFam" id="2.30.30.30:FF:000019">
    <property type="entry name" value="Tumor suppressor p53-binding protein 1"/>
    <property type="match status" value="1"/>
</dbReference>
<dbReference type="FunFam" id="3.40.50.10190:FF:000003">
    <property type="entry name" value="Tumor suppressor p53-binding protein 1"/>
    <property type="match status" value="1"/>
</dbReference>
<dbReference type="FunFam" id="3.40.50.10190:FF:000005">
    <property type="entry name" value="Tumor suppressor p53-binding protein 1"/>
    <property type="match status" value="1"/>
</dbReference>
<dbReference type="Gene3D" id="2.30.30.140">
    <property type="match status" value="1"/>
</dbReference>
<dbReference type="Gene3D" id="2.30.30.30">
    <property type="match status" value="1"/>
</dbReference>
<dbReference type="Gene3D" id="3.40.50.10190">
    <property type="entry name" value="BRCT domain"/>
    <property type="match status" value="2"/>
</dbReference>
<dbReference type="IDEAL" id="IID00123"/>
<dbReference type="InterPro" id="IPR015125">
    <property type="entry name" value="53-BP1_Tudor"/>
</dbReference>
<dbReference type="InterPro" id="IPR001357">
    <property type="entry name" value="BRCT_dom"/>
</dbReference>
<dbReference type="InterPro" id="IPR036420">
    <property type="entry name" value="BRCT_dom_sf"/>
</dbReference>
<dbReference type="InterPro" id="IPR047249">
    <property type="entry name" value="BRCT_p53bp1-like_rpt1"/>
</dbReference>
<dbReference type="InterPro" id="IPR047250">
    <property type="entry name" value="BRCT_p53bp1-like_rpt2"/>
</dbReference>
<dbReference type="InterPro" id="IPR014722">
    <property type="entry name" value="Rib_uL2_dom2"/>
</dbReference>
<dbReference type="InterPro" id="IPR047252">
    <property type="entry name" value="TP53BP1-like"/>
</dbReference>
<dbReference type="PANTHER" id="PTHR15321:SF3">
    <property type="entry name" value="TP53-BINDING PROTEIN 1"/>
    <property type="match status" value="1"/>
</dbReference>
<dbReference type="PANTHER" id="PTHR15321">
    <property type="entry name" value="TUMOR SUPPRESSOR P53-BINDING PROTEIN 1"/>
    <property type="match status" value="1"/>
</dbReference>
<dbReference type="Pfam" id="PF09038">
    <property type="entry name" value="53-BP1_Tudor"/>
    <property type="match status" value="1"/>
</dbReference>
<dbReference type="Pfam" id="PF18428">
    <property type="entry name" value="BRCT_3"/>
    <property type="match status" value="1"/>
</dbReference>
<dbReference type="SMART" id="SM00292">
    <property type="entry name" value="BRCT"/>
    <property type="match status" value="2"/>
</dbReference>
<dbReference type="SUPFAM" id="SSF52113">
    <property type="entry name" value="BRCT domain"/>
    <property type="match status" value="2"/>
</dbReference>
<dbReference type="SUPFAM" id="SSF63748">
    <property type="entry name" value="Tudor/PWWP/MBT"/>
    <property type="match status" value="2"/>
</dbReference>
<dbReference type="PROSITE" id="PS50172">
    <property type="entry name" value="BRCT"/>
    <property type="match status" value="2"/>
</dbReference>
<sequence>MDPTGSQLDSDFSQQDTPCLIIEDSQPESQVLEDDSGSHFSMLSRHLPNLQTHKENPVLDVVSNPEQTAGEERGDGNSGFNEHLKENKVADPVDSSNLDTCGSISQVIEQLPQPNRTSSVLGMSVESAPAVEEEKGEELEQKEKEKEEDTSGNTTHSLGAEDTASSQLGFGVLELSQSQDVEENTVPYEVDKEQLQSVTTNSGYTRLSDVDANTAIKHEEQSNEDIPIAEQSSKDIPVTAQPSKDVHVVKEQNPPPARSEDMPFSPKASVAAMEAKEQLSAQELMESGLQIQKSPEPEVLSTQEDLFDQSNKTVSSDGCSTPSREEGGCSLASTPATTLHLLQLSGQRSLVQDSLSTNSSDLVAPSPDAFRSTPFIVPSSPTEQEGRQDKPMDTSVLSEEGGEPFQKKLQSGEPVELENPPLLPESTVSPQASTPISQSTPVFPPGSLPIPSQPQFSHDIFIPSPSLEEQSNDGKKDGDMHSSSLTVECSKTSEIEPKNSPEDLGLSLTGDSCKLMLSTSEYSQSPKMESLSSHRIDEDGENTQIEDTEPMSPVLNSKFVPAENDSILMNPAQDGEVQLSQNDDKTKGDDTDTRDDISILATGCKGREETVAEDVCIDLTCDSGSQAVPSPATRSEALSSVLDQEEAMEIKEHHPEEGSSGSEVEEIPETPCESQGEELKEENMESVPLHLSLTETQSQGLCLQKEMPKKECSEAMEVETSVISIDSPQKLAILDQELEHKEQEAWEEATSEDSSVVIVDVKEPSPRVDVSCEPLEGVEKCSDSQSWEDIAPEIEPCAENRLDTKEEKSVEYEGDLKSGTAETEPVEQDSSQPSLPLVRADDPLRLDQELQQPQTQEKTSNSLTEDSKMANAKQLSSDAEAQKLGKPSAHASQSFCESSSETPFHFTLPKEGDIIPPLTGATPPLIGHLKLEPKRHSTPIGISNYPESTIATSDVMSESMVETHDPILGSGKGDSGAAPDVDDKLCLRMKLVSPETEASEESLQFNLEKPATGERKNGSTAVAESVASPQKTMSVLSCICEARQENEARSEDPPTTPIRGNLLHFPSSQGEEEKEKLEGDHTIRQSQQPMKPISPVKDPVSPASQKMVIQGPSSPQGEAMVTDVLEDQKEGRSTNKENPSKALIERPSQNNIGIQTMECSLRVPETVSAATQTIKNVCEQGTSTVDQNFGKQDATVQTERGSGEKPVSAPGDDTESLHSQGEEEFDMPQPPHGHVLHRHMRTIREVRTLVTRVITDVYYVDGTEVERKVTEETEEPIVECQECETEVSPSQTGGSSGDLGDISSFSSKASSLHRTSSGTSLSAMHSSGSSGKGAGPLRGKTSGTEPADFALPSSRGGPGKLSPRKGVSQTGTPVCEEDGDAGLGIRQGGKAPVTPRGRGRRGRPPSRTTGTRETAVPGPLGIEDISPNLSPDDKSFSRVVPRVPDSTRRTDVGAGALRRSDSPEIPFQAAAGPSDGLDASSPGNSFVGLRVVAKWSSNGYFYSGKITRDVGAGKYKLLFDDGYECDVLGKDILLCDPIPLDTEVTALSEDEYFSAGVVKGHRKESGELYYSIEKEGQRKWYKRMAVILSLEQGNRLREQYGLGPYEAVTPLTKAADISLDNLVEGKRKRRSNVSSPATPTASSSSSTTPTRKITESPRASMGVLSGKRKLITSEEERSPAKRGRKSATVKPGAVGAGEFVSPCESGDNTGEPSALEEQRGPLPLNKTLFLGYAFLLTMATTSDKLASRSKLPDGPTGSSEEEEEFLEIPPFNKQYTESQLRAGAGYILEDFNEAQCNTAYQCLLIADQHCRTRKYFLCLASGIPCVSHVWVHDSCHANQLQNYRNYLLPAGYSLEEQRILDWQPRENPFQNLKVLLVSDQQQNFLELWSEILMTGGAASVKQHHSSAHNKDIALGVFDVVVTDPSCPASVLKCAEALQLPVVSQEWVIQCLIVGERIGFKQHPKYKHDYVSH</sequence>
<protein>
    <recommendedName>
        <fullName evidence="43">TP53-binding protein 1</fullName>
        <shortName evidence="41">53BP1</shortName>
        <shortName evidence="41">p53-binding protein 1</shortName>
        <shortName>p53BP1</shortName>
    </recommendedName>
</protein>
<organism>
    <name type="scientific">Homo sapiens</name>
    <name type="common">Human</name>
    <dbReference type="NCBI Taxonomy" id="9606"/>
    <lineage>
        <taxon>Eukaryota</taxon>
        <taxon>Metazoa</taxon>
        <taxon>Chordata</taxon>
        <taxon>Craniata</taxon>
        <taxon>Vertebrata</taxon>
        <taxon>Euteleostomi</taxon>
        <taxon>Mammalia</taxon>
        <taxon>Eutheria</taxon>
        <taxon>Euarchontoglires</taxon>
        <taxon>Primates</taxon>
        <taxon>Haplorrhini</taxon>
        <taxon>Catarrhini</taxon>
        <taxon>Hominidae</taxon>
        <taxon>Homo</taxon>
    </lineage>
</organism>
<name>TP53B_HUMAN</name>